<sequence length="391" mass="45144">MSGPVPSRARVYTDVNTHRPREYWDYESHVVEWGNQDDYQLVRKLGRGKYSEVFEAINITNNEKVVVKILKPVKKKKIKREIKILENLRGGPNIITLADIVKDPVSRTPALVFEHVNNTDFKQLYQTLTDYDIRFYMYEILKALDYCHSMGIMHRDVKPHNVMIDHEHRKLRLIDWGLAEFYHPGQEYNVRVASRYFKGPELLVDYQMYDYSLDMWSLGCMLASMIFRKEPFFHGHDNYDQLVRIAKVLGTEDLYDYIDKYNIELDPRFNDILGRHSRKRWERFVHSENQHLVSPEALDFLDKLLRYDHQSRLTAREAMEHPYFYTVVKDQARMGSSSMPGGSTPVSSANMMSGISSVPTPSPLGPLAGSPVIAAANPLGMPVPAAAGAQQ</sequence>
<proteinExistence type="evidence at protein level"/>
<organism>
    <name type="scientific">Homo sapiens</name>
    <name type="common">Human</name>
    <dbReference type="NCBI Taxonomy" id="9606"/>
    <lineage>
        <taxon>Eukaryota</taxon>
        <taxon>Metazoa</taxon>
        <taxon>Chordata</taxon>
        <taxon>Craniata</taxon>
        <taxon>Vertebrata</taxon>
        <taxon>Euteleostomi</taxon>
        <taxon>Mammalia</taxon>
        <taxon>Eutheria</taxon>
        <taxon>Euarchontoglires</taxon>
        <taxon>Primates</taxon>
        <taxon>Haplorrhini</taxon>
        <taxon>Catarrhini</taxon>
        <taxon>Hominidae</taxon>
        <taxon>Homo</taxon>
    </lineage>
</organism>
<protein>
    <recommendedName>
        <fullName>Casein kinase II subunit alpha</fullName>
        <shortName>CK II alpha</shortName>
        <ecNumber evidence="16 19 21 28 31">2.7.11.1</ecNumber>
    </recommendedName>
</protein>
<dbReference type="EC" id="2.7.11.1" evidence="16 19 21 28 31"/>
<dbReference type="EMBL" id="J02853">
    <property type="protein sequence ID" value="AAA56821.1"/>
    <property type="molecule type" value="mRNA"/>
</dbReference>
<dbReference type="EMBL" id="M55265">
    <property type="protein sequence ID" value="AAA35503.1"/>
    <property type="molecule type" value="mRNA"/>
</dbReference>
<dbReference type="EMBL" id="S53149">
    <property type="protein sequence ID" value="ABB72474.1"/>
    <property type="molecule type" value="mRNA"/>
</dbReference>
<dbReference type="EMBL" id="X70251">
    <property type="protein sequence ID" value="CAA49758.1"/>
    <property type="molecule type" value="Genomic_DNA"/>
</dbReference>
<dbReference type="EMBL" id="AK302583">
    <property type="protein sequence ID" value="BAG63838.1"/>
    <property type="molecule type" value="mRNA"/>
</dbReference>
<dbReference type="EMBL" id="BT019792">
    <property type="protein sequence ID" value="AAV38595.1"/>
    <property type="molecule type" value="mRNA"/>
</dbReference>
<dbReference type="EMBL" id="AB451279">
    <property type="protein sequence ID" value="BAG70093.1"/>
    <property type="molecule type" value="mRNA"/>
</dbReference>
<dbReference type="EMBL" id="AL049761">
    <property type="status" value="NOT_ANNOTATED_CDS"/>
    <property type="molecule type" value="Genomic_DNA"/>
</dbReference>
<dbReference type="EMBL" id="CH471133">
    <property type="protein sequence ID" value="EAX10665.1"/>
    <property type="molecule type" value="Genomic_DNA"/>
</dbReference>
<dbReference type="EMBL" id="CH471133">
    <property type="protein sequence ID" value="EAX10666.1"/>
    <property type="molecule type" value="Genomic_DNA"/>
</dbReference>
<dbReference type="EMBL" id="CH471133">
    <property type="protein sequence ID" value="EAX10667.1"/>
    <property type="molecule type" value="Genomic_DNA"/>
</dbReference>
<dbReference type="EMBL" id="CH471133">
    <property type="protein sequence ID" value="EAX10668.1"/>
    <property type="molecule type" value="Genomic_DNA"/>
</dbReference>
<dbReference type="EMBL" id="CH471133">
    <property type="protein sequence ID" value="EAX10669.1"/>
    <property type="molecule type" value="Genomic_DNA"/>
</dbReference>
<dbReference type="EMBL" id="BC011668">
    <property type="protein sequence ID" value="AAH11668.1"/>
    <property type="molecule type" value="mRNA"/>
</dbReference>
<dbReference type="EMBL" id="BC053532">
    <property type="protein sequence ID" value="AAH53532.1"/>
    <property type="molecule type" value="mRNA"/>
</dbReference>
<dbReference type="EMBL" id="BC071167">
    <property type="protein sequence ID" value="AAH71167.1"/>
    <property type="molecule type" value="mRNA"/>
</dbReference>
<dbReference type="CCDS" id="CCDS13003.1">
    <molecule id="P68400-1"/>
</dbReference>
<dbReference type="CCDS" id="CCDS13004.1">
    <molecule id="P68400-2"/>
</dbReference>
<dbReference type="PIR" id="A30319">
    <property type="entry name" value="A30319"/>
</dbReference>
<dbReference type="RefSeq" id="NP_001349699.1">
    <molecule id="P68400-1"/>
    <property type="nucleotide sequence ID" value="NM_001362770.2"/>
</dbReference>
<dbReference type="RefSeq" id="NP_001349700.1">
    <molecule id="P68400-1"/>
    <property type="nucleotide sequence ID" value="NM_001362771.2"/>
</dbReference>
<dbReference type="RefSeq" id="NP_001886.1">
    <molecule id="P68400-1"/>
    <property type="nucleotide sequence ID" value="NM_001895.4"/>
</dbReference>
<dbReference type="RefSeq" id="NP_808227.1">
    <molecule id="P68400-1"/>
    <property type="nucleotide sequence ID" value="NM_177559.3"/>
</dbReference>
<dbReference type="RefSeq" id="NP_808228.1">
    <molecule id="P68400-2"/>
    <property type="nucleotide sequence ID" value="NM_177560.3"/>
</dbReference>
<dbReference type="PDB" id="1JWH">
    <property type="method" value="X-ray"/>
    <property type="resolution" value="3.10 A"/>
    <property type="chains" value="A/B=1-337"/>
</dbReference>
<dbReference type="PDB" id="1NA7">
    <property type="method" value="X-ray"/>
    <property type="resolution" value="2.40 A"/>
    <property type="chains" value="A=1-329"/>
</dbReference>
<dbReference type="PDB" id="1PJK">
    <property type="method" value="X-ray"/>
    <property type="resolution" value="2.50 A"/>
    <property type="chains" value="A=2-335"/>
</dbReference>
<dbReference type="PDB" id="2PVR">
    <property type="method" value="X-ray"/>
    <property type="resolution" value="1.60 A"/>
    <property type="chains" value="A=2-335"/>
</dbReference>
<dbReference type="PDB" id="2ZJW">
    <property type="method" value="X-ray"/>
    <property type="resolution" value="2.40 A"/>
    <property type="chains" value="A=1-335"/>
</dbReference>
<dbReference type="PDB" id="3AMY">
    <property type="method" value="X-ray"/>
    <property type="resolution" value="2.30 A"/>
    <property type="chains" value="A=1-335"/>
</dbReference>
<dbReference type="PDB" id="3AT2">
    <property type="method" value="X-ray"/>
    <property type="resolution" value="1.60 A"/>
    <property type="chains" value="A=1-335"/>
</dbReference>
<dbReference type="PDB" id="3AT3">
    <property type="method" value="X-ray"/>
    <property type="resolution" value="2.60 A"/>
    <property type="chains" value="A=1-335"/>
</dbReference>
<dbReference type="PDB" id="3AT4">
    <property type="method" value="X-ray"/>
    <property type="resolution" value="2.20 A"/>
    <property type="chains" value="A=1-335"/>
</dbReference>
<dbReference type="PDB" id="3AXW">
    <property type="method" value="X-ray"/>
    <property type="resolution" value="2.50 A"/>
    <property type="chains" value="A=1-335"/>
</dbReference>
<dbReference type="PDB" id="3BQC">
    <property type="method" value="X-ray"/>
    <property type="resolution" value="1.50 A"/>
    <property type="chains" value="A=1-335"/>
</dbReference>
<dbReference type="PDB" id="3C13">
    <property type="method" value="X-ray"/>
    <property type="resolution" value="1.95 A"/>
    <property type="chains" value="A=1-335"/>
</dbReference>
<dbReference type="PDB" id="3FWQ">
    <property type="method" value="X-ray"/>
    <property type="resolution" value="2.30 A"/>
    <property type="chains" value="A/B=1-335"/>
</dbReference>
<dbReference type="PDB" id="3H30">
    <property type="method" value="X-ray"/>
    <property type="resolution" value="1.56 A"/>
    <property type="chains" value="A/B=1-334"/>
</dbReference>
<dbReference type="PDB" id="3JUH">
    <property type="method" value="X-ray"/>
    <property type="resolution" value="1.66 A"/>
    <property type="chains" value="A/B=1-335"/>
</dbReference>
<dbReference type="PDB" id="3MB6">
    <property type="method" value="X-ray"/>
    <property type="resolution" value="1.75 A"/>
    <property type="chains" value="A=1-331"/>
</dbReference>
<dbReference type="PDB" id="3MB7">
    <property type="method" value="X-ray"/>
    <property type="resolution" value="1.65 A"/>
    <property type="chains" value="A=1-331"/>
</dbReference>
<dbReference type="PDB" id="3NGA">
    <property type="method" value="X-ray"/>
    <property type="resolution" value="2.71 A"/>
    <property type="chains" value="A/B=1-333"/>
</dbReference>
<dbReference type="PDB" id="3NSZ">
    <property type="method" value="X-ray"/>
    <property type="resolution" value="1.30 A"/>
    <property type="chains" value="A=2-331"/>
</dbReference>
<dbReference type="PDB" id="3OWJ">
    <property type="method" value="X-ray"/>
    <property type="resolution" value="1.85 A"/>
    <property type="chains" value="A=1-331"/>
</dbReference>
<dbReference type="PDB" id="3OWK">
    <property type="method" value="X-ray"/>
    <property type="resolution" value="1.80 A"/>
    <property type="chains" value="A=1-331"/>
</dbReference>
<dbReference type="PDB" id="3OWL">
    <property type="method" value="X-ray"/>
    <property type="resolution" value="2.10 A"/>
    <property type="chains" value="A=1-331"/>
</dbReference>
<dbReference type="PDB" id="3PE1">
    <property type="method" value="X-ray"/>
    <property type="resolution" value="1.60 A"/>
    <property type="chains" value="A=1-337"/>
</dbReference>
<dbReference type="PDB" id="3PE2">
    <property type="method" value="X-ray"/>
    <property type="resolution" value="1.90 A"/>
    <property type="chains" value="A=1-337"/>
</dbReference>
<dbReference type="PDB" id="3PE4">
    <property type="method" value="X-ray"/>
    <property type="resolution" value="1.95 A"/>
    <property type="chains" value="B/D=340-352"/>
</dbReference>
<dbReference type="PDB" id="3Q04">
    <property type="method" value="X-ray"/>
    <property type="resolution" value="1.80 A"/>
    <property type="chains" value="A=3-330"/>
</dbReference>
<dbReference type="PDB" id="3Q9W">
    <property type="method" value="X-ray"/>
    <property type="resolution" value="1.70 A"/>
    <property type="chains" value="A=1-336"/>
</dbReference>
<dbReference type="PDB" id="3Q9X">
    <property type="method" value="X-ray"/>
    <property type="resolution" value="2.20 A"/>
    <property type="chains" value="A/B=1-336"/>
</dbReference>
<dbReference type="PDB" id="3Q9Y">
    <property type="method" value="X-ray"/>
    <property type="resolution" value="1.80 A"/>
    <property type="chains" value="A=1-336"/>
</dbReference>
<dbReference type="PDB" id="3Q9Z">
    <property type="method" value="X-ray"/>
    <property type="resolution" value="2.20 A"/>
    <property type="chains" value="A/B=1-336"/>
</dbReference>
<dbReference type="PDB" id="3QA0">
    <property type="method" value="X-ray"/>
    <property type="resolution" value="2.50 A"/>
    <property type="chains" value="A/B=1-336"/>
</dbReference>
<dbReference type="PDB" id="3R0T">
    <property type="method" value="X-ray"/>
    <property type="resolution" value="1.75 A"/>
    <property type="chains" value="A=1-337"/>
</dbReference>
<dbReference type="PDB" id="3RPS">
    <property type="method" value="X-ray"/>
    <property type="resolution" value="2.30 A"/>
    <property type="chains" value="A/B=1-335"/>
</dbReference>
<dbReference type="PDB" id="3TAX">
    <property type="method" value="X-ray"/>
    <property type="resolution" value="1.88 A"/>
    <property type="chains" value="B/D=340-352"/>
</dbReference>
<dbReference type="PDB" id="3U4U">
    <property type="method" value="X-ray"/>
    <property type="resolution" value="2.20 A"/>
    <property type="chains" value="A=1-333"/>
</dbReference>
<dbReference type="PDB" id="3U87">
    <property type="method" value="X-ray"/>
    <property type="resolution" value="2.90 A"/>
    <property type="chains" value="A/B=1-325"/>
</dbReference>
<dbReference type="PDB" id="3U9C">
    <property type="method" value="X-ray"/>
    <property type="resolution" value="3.20 A"/>
    <property type="chains" value="A/B=1-335"/>
</dbReference>
<dbReference type="PDB" id="3W8L">
    <property type="method" value="X-ray"/>
    <property type="resolution" value="2.40 A"/>
    <property type="chains" value="A/B=1-335"/>
</dbReference>
<dbReference type="PDB" id="3WAR">
    <property type="method" value="X-ray"/>
    <property type="resolution" value="1.04 A"/>
    <property type="chains" value="A=1-335"/>
</dbReference>
<dbReference type="PDB" id="3WIK">
    <property type="method" value="X-ray"/>
    <property type="resolution" value="2.00 A"/>
    <property type="chains" value="A=1-335"/>
</dbReference>
<dbReference type="PDB" id="3WIL">
    <property type="method" value="X-ray"/>
    <property type="resolution" value="2.90 A"/>
    <property type="chains" value="A=1-335"/>
</dbReference>
<dbReference type="PDB" id="3WOW">
    <property type="method" value="X-ray"/>
    <property type="resolution" value="2.50 A"/>
    <property type="chains" value="A=1-335"/>
</dbReference>
<dbReference type="PDB" id="4DGL">
    <property type="method" value="X-ray"/>
    <property type="resolution" value="3.00 A"/>
    <property type="chains" value="C/D=1-335"/>
</dbReference>
<dbReference type="PDB" id="4FBX">
    <property type="method" value="X-ray"/>
    <property type="resolution" value="2.33 A"/>
    <property type="chains" value="A=1-335"/>
</dbReference>
<dbReference type="PDB" id="4GRB">
    <property type="method" value="X-ray"/>
    <property type="resolution" value="2.15 A"/>
    <property type="chains" value="A=1-333"/>
</dbReference>
<dbReference type="PDB" id="4GUB">
    <property type="method" value="X-ray"/>
    <property type="resolution" value="2.20 A"/>
    <property type="chains" value="A=1-333"/>
</dbReference>
<dbReference type="PDB" id="4GYW">
    <property type="method" value="X-ray"/>
    <property type="resolution" value="1.70 A"/>
    <property type="chains" value="B/D=340-352"/>
</dbReference>
<dbReference type="PDB" id="4GYY">
    <property type="method" value="X-ray"/>
    <property type="resolution" value="1.85 A"/>
    <property type="chains" value="B/D=340-352"/>
</dbReference>
<dbReference type="PDB" id="4GZ3">
    <property type="method" value="X-ray"/>
    <property type="resolution" value="1.90 A"/>
    <property type="chains" value="B/D=340-352"/>
</dbReference>
<dbReference type="PDB" id="4IB5">
    <property type="method" value="X-ray"/>
    <property type="resolution" value="2.20 A"/>
    <property type="chains" value="A/B/C=1-335"/>
</dbReference>
<dbReference type="PDB" id="4KWP">
    <property type="method" value="X-ray"/>
    <property type="resolution" value="1.25 A"/>
    <property type="chains" value="A=1-336"/>
</dbReference>
<dbReference type="PDB" id="4MD7">
    <property type="method" value="X-ray"/>
    <property type="resolution" value="3.10 A"/>
    <property type="chains" value="E/F/G/H=1-391"/>
</dbReference>
<dbReference type="PDB" id="4MD8">
    <property type="method" value="X-ray"/>
    <property type="resolution" value="3.30 A"/>
    <property type="chains" value="E/F/G/H=1-391"/>
</dbReference>
<dbReference type="PDB" id="4MD9">
    <property type="method" value="X-ray"/>
    <property type="resolution" value="3.50 A"/>
    <property type="chains" value="E/F/G/H/K/L/M/P=1-336"/>
</dbReference>
<dbReference type="PDB" id="4NH1">
    <property type="method" value="X-ray"/>
    <property type="resolution" value="3.30 A"/>
    <property type="chains" value="A/B=1-335"/>
</dbReference>
<dbReference type="PDB" id="4RLL">
    <property type="method" value="X-ray"/>
    <property type="resolution" value="1.85 A"/>
    <property type="chains" value="A=1-335"/>
</dbReference>
<dbReference type="PDB" id="4UB7">
    <property type="method" value="X-ray"/>
    <property type="resolution" value="2.10 A"/>
    <property type="chains" value="A=1-335"/>
</dbReference>
<dbReference type="PDB" id="4UBA">
    <property type="method" value="X-ray"/>
    <property type="resolution" value="3.00 A"/>
    <property type="chains" value="A/B=1-335"/>
</dbReference>
<dbReference type="PDB" id="5B0X">
    <property type="method" value="X-ray"/>
    <property type="resolution" value="2.30 A"/>
    <property type="chains" value="A=1-335"/>
</dbReference>
<dbReference type="PDB" id="5CLP">
    <property type="method" value="X-ray"/>
    <property type="resolution" value="1.68 A"/>
    <property type="chains" value="A/B=2-329"/>
</dbReference>
<dbReference type="PDB" id="5CQU">
    <property type="method" value="X-ray"/>
    <property type="resolution" value="2.35 A"/>
    <property type="chains" value="A=1-335"/>
</dbReference>
<dbReference type="PDB" id="5CQW">
    <property type="method" value="X-ray"/>
    <property type="resolution" value="2.65 A"/>
    <property type="chains" value="A/B=1-335"/>
</dbReference>
<dbReference type="PDB" id="5CS6">
    <property type="method" value="X-ray"/>
    <property type="resolution" value="1.88 A"/>
    <property type="chains" value="A/B=2-329"/>
</dbReference>
<dbReference type="PDB" id="5CSH">
    <property type="method" value="X-ray"/>
    <property type="resolution" value="1.59 A"/>
    <property type="chains" value="A/B=2-329"/>
</dbReference>
<dbReference type="PDB" id="5CSP">
    <property type="method" value="X-ray"/>
    <property type="resolution" value="1.50 A"/>
    <property type="chains" value="A=2-329"/>
</dbReference>
<dbReference type="PDB" id="5CSV">
    <property type="method" value="X-ray"/>
    <property type="resolution" value="1.38 A"/>
    <property type="chains" value="A=2-329"/>
</dbReference>
<dbReference type="PDB" id="5CT0">
    <property type="method" value="X-ray"/>
    <property type="resolution" value="2.01 A"/>
    <property type="chains" value="A/B=2-329"/>
</dbReference>
<dbReference type="PDB" id="5CTP">
    <property type="method" value="X-ray"/>
    <property type="resolution" value="2.03 A"/>
    <property type="chains" value="A/B=2-329"/>
</dbReference>
<dbReference type="PDB" id="5CU0">
    <property type="method" value="X-ray"/>
    <property type="resolution" value="2.18 A"/>
    <property type="chains" value="A/B=2-329"/>
</dbReference>
<dbReference type="PDB" id="5CU2">
    <property type="method" value="X-ray"/>
    <property type="resolution" value="1.71 A"/>
    <property type="chains" value="A/B=2-329"/>
</dbReference>
<dbReference type="PDB" id="5CU3">
    <property type="method" value="X-ray"/>
    <property type="resolution" value="1.79 A"/>
    <property type="chains" value="A/B=2-329"/>
</dbReference>
<dbReference type="PDB" id="5CU4">
    <property type="method" value="X-ray"/>
    <property type="resolution" value="1.56 A"/>
    <property type="chains" value="A=2-329"/>
</dbReference>
<dbReference type="PDB" id="5CU6">
    <property type="method" value="X-ray"/>
    <property type="resolution" value="1.36 A"/>
    <property type="chains" value="A=2-329"/>
</dbReference>
<dbReference type="PDB" id="5CVF">
    <property type="method" value="X-ray"/>
    <property type="resolution" value="1.63 A"/>
    <property type="chains" value="A=2-329"/>
</dbReference>
<dbReference type="PDB" id="5CVG">
    <property type="method" value="X-ray"/>
    <property type="resolution" value="1.25 A"/>
    <property type="chains" value="A=2-329"/>
</dbReference>
<dbReference type="PDB" id="5CVH">
    <property type="method" value="X-ray"/>
    <property type="resolution" value="1.85 A"/>
    <property type="chains" value="A/B=2-329"/>
</dbReference>
<dbReference type="PDB" id="5CX9">
    <property type="method" value="X-ray"/>
    <property type="resolution" value="1.73 A"/>
    <property type="chains" value="A/B=2-329"/>
</dbReference>
<dbReference type="PDB" id="5H8B">
    <property type="method" value="X-ray"/>
    <property type="resolution" value="2.55 A"/>
    <property type="chains" value="A/B=1-333"/>
</dbReference>
<dbReference type="PDB" id="5H8E">
    <property type="method" value="X-ray"/>
    <property type="resolution" value="2.15 A"/>
    <property type="chains" value="A/B=1-333"/>
</dbReference>
<dbReference type="PDB" id="5H8G">
    <property type="method" value="X-ray"/>
    <property type="resolution" value="2.00 A"/>
    <property type="chains" value="A=1-333"/>
</dbReference>
<dbReference type="PDB" id="5HGV">
    <property type="method" value="X-ray"/>
    <property type="resolution" value="2.05 A"/>
    <property type="chains" value="B/D=340-352"/>
</dbReference>
<dbReference type="PDB" id="5KU8">
    <property type="method" value="X-ray"/>
    <property type="resolution" value="2.22 A"/>
    <property type="chains" value="A/B=2-332"/>
</dbReference>
<dbReference type="PDB" id="5KWH">
    <property type="method" value="X-ray"/>
    <property type="resolution" value="2.12 A"/>
    <property type="chains" value="A/B=1-333"/>
</dbReference>
<dbReference type="PDB" id="5M44">
    <property type="method" value="X-ray"/>
    <property type="resolution" value="2.71 A"/>
    <property type="chains" value="A=1-335"/>
</dbReference>
<dbReference type="PDB" id="5M4C">
    <property type="method" value="X-ray"/>
    <property type="resolution" value="1.94 A"/>
    <property type="chains" value="A=1-335"/>
</dbReference>
<dbReference type="PDB" id="5M4F">
    <property type="method" value="X-ray"/>
    <property type="resolution" value="1.52 A"/>
    <property type="chains" value="A=1-335"/>
</dbReference>
<dbReference type="PDB" id="5M4I">
    <property type="method" value="X-ray"/>
    <property type="resolution" value="2.22 A"/>
    <property type="chains" value="A=1-335"/>
</dbReference>
<dbReference type="PDB" id="5MMF">
    <property type="method" value="X-ray"/>
    <property type="resolution" value="1.99 A"/>
    <property type="chains" value="A/B=2-329"/>
</dbReference>
<dbReference type="PDB" id="5MMR">
    <property type="method" value="X-ray"/>
    <property type="resolution" value="2.00 A"/>
    <property type="chains" value="A/B=2-329"/>
</dbReference>
<dbReference type="PDB" id="5MO5">
    <property type="method" value="X-ray"/>
    <property type="resolution" value="2.04 A"/>
    <property type="chains" value="A/B=2-329"/>
</dbReference>
<dbReference type="PDB" id="5MO6">
    <property type="method" value="X-ray"/>
    <property type="resolution" value="1.82 A"/>
    <property type="chains" value="A/B=2-329"/>
</dbReference>
<dbReference type="PDB" id="5MO7">
    <property type="method" value="X-ray"/>
    <property type="resolution" value="2.15 A"/>
    <property type="chains" value="A/B=2-329"/>
</dbReference>
<dbReference type="PDB" id="5MO8">
    <property type="method" value="X-ray"/>
    <property type="resolution" value="1.82 A"/>
    <property type="chains" value="A/B=2-329"/>
</dbReference>
<dbReference type="PDB" id="5MOD">
    <property type="method" value="X-ray"/>
    <property type="resolution" value="2.08 A"/>
    <property type="chains" value="A/B=2-329"/>
</dbReference>
<dbReference type="PDB" id="5MOE">
    <property type="method" value="X-ray"/>
    <property type="resolution" value="1.89 A"/>
    <property type="chains" value="A/B=2-329"/>
</dbReference>
<dbReference type="PDB" id="5MOH">
    <property type="method" value="X-ray"/>
    <property type="resolution" value="1.38 A"/>
    <property type="chains" value="A=2-329"/>
</dbReference>
<dbReference type="PDB" id="5MOT">
    <property type="method" value="X-ray"/>
    <property type="resolution" value="2.09 A"/>
    <property type="chains" value="A=2-329"/>
</dbReference>
<dbReference type="PDB" id="5MOV">
    <property type="method" value="X-ray"/>
    <property type="resolution" value="2.20 A"/>
    <property type="chains" value="A=3-327"/>
</dbReference>
<dbReference type="PDB" id="5MOW">
    <property type="method" value="X-ray"/>
    <property type="resolution" value="1.86 A"/>
    <property type="chains" value="A/B=2-329"/>
</dbReference>
<dbReference type="PDB" id="5MP8">
    <property type="method" value="X-ray"/>
    <property type="resolution" value="1.92 A"/>
    <property type="chains" value="A/B=2-329"/>
</dbReference>
<dbReference type="PDB" id="5MPJ">
    <property type="method" value="X-ray"/>
    <property type="resolution" value="2.14 A"/>
    <property type="chains" value="A/B=2-329"/>
</dbReference>
<dbReference type="PDB" id="5N1V">
    <property type="method" value="X-ray"/>
    <property type="resolution" value="2.52 A"/>
    <property type="chains" value="A/B=1-336"/>
</dbReference>
<dbReference type="PDB" id="5N9K">
    <property type="method" value="X-ray"/>
    <property type="resolution" value="1.64 A"/>
    <property type="chains" value="A=1-335"/>
</dbReference>
<dbReference type="PDB" id="5N9L">
    <property type="method" value="X-ray"/>
    <property type="resolution" value="1.79 A"/>
    <property type="chains" value="A=1-335"/>
</dbReference>
<dbReference type="PDB" id="5N9N">
    <property type="method" value="X-ray"/>
    <property type="resolution" value="1.84 A"/>
    <property type="chains" value="A=1-335"/>
</dbReference>
<dbReference type="PDB" id="5NQC">
    <property type="method" value="X-ray"/>
    <property type="resolution" value="2.00 A"/>
    <property type="chains" value="A=2-335"/>
</dbReference>
<dbReference type="PDB" id="5OMY">
    <property type="method" value="X-ray"/>
    <property type="resolution" value="1.95 A"/>
    <property type="chains" value="A=1-391"/>
</dbReference>
<dbReference type="PDB" id="5ONI">
    <property type="method" value="X-ray"/>
    <property type="resolution" value="2.00 A"/>
    <property type="chains" value="A/B=1-391"/>
</dbReference>
<dbReference type="PDB" id="5OQU">
    <property type="method" value="X-ray"/>
    <property type="resolution" value="2.32 A"/>
    <property type="chains" value="A/B=2-329"/>
</dbReference>
<dbReference type="PDB" id="5ORH">
    <property type="method" value="X-ray"/>
    <property type="resolution" value="1.75 A"/>
    <property type="chains" value="A/B=2-329"/>
</dbReference>
<dbReference type="PDB" id="5ORJ">
    <property type="method" value="X-ray"/>
    <property type="resolution" value="1.99 A"/>
    <property type="chains" value="A/B=2-329"/>
</dbReference>
<dbReference type="PDB" id="5ORK">
    <property type="method" value="X-ray"/>
    <property type="resolution" value="2.14 A"/>
    <property type="chains" value="A/B=2-329"/>
</dbReference>
<dbReference type="PDB" id="5OS7">
    <property type="method" value="X-ray"/>
    <property type="resolution" value="1.66 A"/>
    <property type="chains" value="A/B=2-329"/>
</dbReference>
<dbReference type="PDB" id="5OS8">
    <property type="method" value="X-ray"/>
    <property type="resolution" value="1.55 A"/>
    <property type="chains" value="A=2-329"/>
</dbReference>
<dbReference type="PDB" id="5OSL">
    <property type="method" value="X-ray"/>
    <property type="resolution" value="1.95 A"/>
    <property type="chains" value="A=2-329"/>
</dbReference>
<dbReference type="PDB" id="5OSP">
    <property type="method" value="X-ray"/>
    <property type="resolution" value="1.91 A"/>
    <property type="chains" value="A=2-329"/>
</dbReference>
<dbReference type="PDB" id="5OSR">
    <property type="method" value="X-ray"/>
    <property type="resolution" value="1.57 A"/>
    <property type="chains" value="A=2-329"/>
</dbReference>
<dbReference type="PDB" id="5OSU">
    <property type="method" value="X-ray"/>
    <property type="resolution" value="1.63 A"/>
    <property type="chains" value="A=2-329"/>
</dbReference>
<dbReference type="PDB" id="5OSZ">
    <property type="method" value="X-ray"/>
    <property type="resolution" value="2.00 A"/>
    <property type="chains" value="A=2-329"/>
</dbReference>
<dbReference type="PDB" id="5OT5">
    <property type="method" value="X-ray"/>
    <property type="resolution" value="1.63 A"/>
    <property type="chains" value="A/B=2-329"/>
</dbReference>
<dbReference type="PDB" id="5OT6">
    <property type="method" value="X-ray"/>
    <property type="resolution" value="1.94 A"/>
    <property type="chains" value="A/B=2-329"/>
</dbReference>
<dbReference type="PDB" id="5OTD">
    <property type="method" value="X-ray"/>
    <property type="resolution" value="1.57 A"/>
    <property type="chains" value="A/B=2-329"/>
</dbReference>
<dbReference type="PDB" id="5OTH">
    <property type="method" value="X-ray"/>
    <property type="resolution" value="1.69 A"/>
    <property type="chains" value="A/B=2-329"/>
</dbReference>
<dbReference type="PDB" id="5OTI">
    <property type="method" value="X-ray"/>
    <property type="resolution" value="1.59 A"/>
    <property type="chains" value="A=2-329"/>
</dbReference>
<dbReference type="PDB" id="5OTL">
    <property type="method" value="X-ray"/>
    <property type="resolution" value="1.57 A"/>
    <property type="chains" value="A/B=2-329"/>
</dbReference>
<dbReference type="PDB" id="5OTO">
    <property type="method" value="X-ray"/>
    <property type="resolution" value="1.51 A"/>
    <property type="chains" value="A/B=2-329"/>
</dbReference>
<dbReference type="PDB" id="5OTP">
    <property type="method" value="X-ray"/>
    <property type="resolution" value="1.57 A"/>
    <property type="chains" value="A/B=2-329"/>
</dbReference>
<dbReference type="PDB" id="5OTQ">
    <property type="method" value="X-ray"/>
    <property type="resolution" value="1.38 A"/>
    <property type="chains" value="A=2-329"/>
</dbReference>
<dbReference type="PDB" id="5OTR">
    <property type="method" value="X-ray"/>
    <property type="resolution" value="1.52 A"/>
    <property type="chains" value="A=2-329"/>
</dbReference>
<dbReference type="PDB" id="5OTS">
    <property type="method" value="X-ray"/>
    <property type="resolution" value="1.90 A"/>
    <property type="chains" value="A=2-329"/>
</dbReference>
<dbReference type="PDB" id="5OTY">
    <property type="method" value="X-ray"/>
    <property type="resolution" value="1.48 A"/>
    <property type="chains" value="A=2-329"/>
</dbReference>
<dbReference type="PDB" id="5OTZ">
    <property type="method" value="X-ray"/>
    <property type="resolution" value="1.46 A"/>
    <property type="chains" value="A=2-329"/>
</dbReference>
<dbReference type="PDB" id="5OUE">
    <property type="method" value="X-ray"/>
    <property type="resolution" value="2.01 A"/>
    <property type="chains" value="A/B=2-329"/>
</dbReference>
<dbReference type="PDB" id="5OUL">
    <property type="method" value="X-ray"/>
    <property type="resolution" value="1.34 A"/>
    <property type="chains" value="A=2-329"/>
</dbReference>
<dbReference type="PDB" id="5OUM">
    <property type="method" value="X-ray"/>
    <property type="resolution" value="2.05 A"/>
    <property type="chains" value="A/B=2-329"/>
</dbReference>
<dbReference type="PDB" id="5OUU">
    <property type="method" value="X-ray"/>
    <property type="resolution" value="1.81 A"/>
    <property type="chains" value="A/B=2-329"/>
</dbReference>
<dbReference type="PDB" id="5OWH">
    <property type="method" value="X-ray"/>
    <property type="resolution" value="2.30 A"/>
    <property type="chains" value="A=1-335"/>
</dbReference>
<dbReference type="PDB" id="5OWL">
    <property type="method" value="X-ray"/>
    <property type="resolution" value="2.23 A"/>
    <property type="chains" value="A/B=1-335"/>
</dbReference>
<dbReference type="PDB" id="5OYF">
    <property type="method" value="X-ray"/>
    <property type="resolution" value="1.54 A"/>
    <property type="chains" value="A=2-329"/>
</dbReference>
<dbReference type="PDB" id="5T1H">
    <property type="method" value="X-ray"/>
    <property type="resolution" value="2.11 A"/>
    <property type="chains" value="A/B=1-333"/>
</dbReference>
<dbReference type="PDB" id="5VIE">
    <property type="method" value="X-ray"/>
    <property type="resolution" value="2.60 A"/>
    <property type="chains" value="B/D=339-352"/>
</dbReference>
<dbReference type="PDB" id="5VIF">
    <property type="method" value="X-ray"/>
    <property type="resolution" value="2.25 A"/>
    <property type="chains" value="B=339-352"/>
</dbReference>
<dbReference type="PDB" id="5ZN0">
    <property type="method" value="Other"/>
    <property type="resolution" value="1.10 A"/>
    <property type="chains" value="A=1-329"/>
</dbReference>
<dbReference type="PDB" id="5ZN1">
    <property type="method" value="X-ray"/>
    <property type="resolution" value="1.05 A"/>
    <property type="chains" value="A=1-329"/>
</dbReference>
<dbReference type="PDB" id="5ZN2">
    <property type="method" value="X-ray"/>
    <property type="resolution" value="1.20 A"/>
    <property type="chains" value="A=1-329"/>
</dbReference>
<dbReference type="PDB" id="5ZN3">
    <property type="method" value="X-ray"/>
    <property type="resolution" value="1.50 A"/>
    <property type="chains" value="A=1-329"/>
</dbReference>
<dbReference type="PDB" id="5ZN4">
    <property type="method" value="X-ray"/>
    <property type="resolution" value="1.65 A"/>
    <property type="chains" value="A=1-329"/>
</dbReference>
<dbReference type="PDB" id="5ZN5">
    <property type="method" value="X-ray"/>
    <property type="resolution" value="1.70 A"/>
    <property type="chains" value="A=1-329"/>
</dbReference>
<dbReference type="PDB" id="6A1C">
    <property type="method" value="X-ray"/>
    <property type="resolution" value="1.68 A"/>
    <property type="chains" value="A=1-335"/>
</dbReference>
<dbReference type="PDB" id="6E37">
    <property type="method" value="X-ray"/>
    <property type="resolution" value="2.53 A"/>
    <property type="chains" value="B=339-352"/>
</dbReference>
<dbReference type="PDB" id="6EHK">
    <property type="method" value="X-ray"/>
    <property type="resolution" value="1.40 A"/>
    <property type="chains" value="A=2-329"/>
</dbReference>
<dbReference type="PDB" id="6EHU">
    <property type="method" value="X-ray"/>
    <property type="resolution" value="1.95 A"/>
    <property type="chains" value="A/B=2-329"/>
</dbReference>
<dbReference type="PDB" id="6EII">
    <property type="method" value="X-ray"/>
    <property type="resolution" value="1.94 A"/>
    <property type="chains" value="A/B=2-329"/>
</dbReference>
<dbReference type="PDB" id="6FVF">
    <property type="method" value="X-ray"/>
    <property type="resolution" value="1.47 A"/>
    <property type="chains" value="A=2-329"/>
</dbReference>
<dbReference type="PDB" id="6FVG">
    <property type="method" value="X-ray"/>
    <property type="resolution" value="1.60 A"/>
    <property type="chains" value="A=2-329"/>
</dbReference>
<dbReference type="PDB" id="6GIH">
    <property type="method" value="X-ray"/>
    <property type="resolution" value="1.96 A"/>
    <property type="chains" value="A=2-329"/>
</dbReference>
<dbReference type="PDB" id="6GMD">
    <property type="method" value="X-ray"/>
    <property type="resolution" value="1.66 A"/>
    <property type="chains" value="A/B=2-329"/>
</dbReference>
<dbReference type="PDB" id="6HBN">
    <property type="method" value="X-ray"/>
    <property type="resolution" value="1.59 A"/>
    <property type="chains" value="A/B=1-335"/>
</dbReference>
<dbReference type="PDB" id="6HME">
    <property type="method" value="X-ray"/>
    <property type="resolution" value="1.85 A"/>
    <property type="chains" value="A/B=1-335"/>
</dbReference>
<dbReference type="PDB" id="6HNW">
    <property type="method" value="X-ray"/>
    <property type="resolution" value="2.00 A"/>
    <property type="chains" value="A=1-336"/>
</dbReference>
<dbReference type="PDB" id="6HNY">
    <property type="method" value="X-ray"/>
    <property type="resolution" value="1.65 A"/>
    <property type="chains" value="A=1-336"/>
</dbReference>
<dbReference type="PDB" id="6HOP">
    <property type="method" value="X-ray"/>
    <property type="resolution" value="1.55 A"/>
    <property type="chains" value="A=1-336"/>
</dbReference>
<dbReference type="PDB" id="6HOQ">
    <property type="method" value="X-ray"/>
    <property type="resolution" value="1.55 A"/>
    <property type="chains" value="A=1-336"/>
</dbReference>
<dbReference type="PDB" id="6HOR">
    <property type="method" value="X-ray"/>
    <property type="resolution" value="1.80 A"/>
    <property type="chains" value="A=1-336"/>
</dbReference>
<dbReference type="PDB" id="6HOT">
    <property type="method" value="X-ray"/>
    <property type="resolution" value="1.50 A"/>
    <property type="chains" value="A=1-336"/>
</dbReference>
<dbReference type="PDB" id="6HOU">
    <property type="method" value="X-ray"/>
    <property type="resolution" value="1.80 A"/>
    <property type="chains" value="A=1-336"/>
</dbReference>
<dbReference type="PDB" id="6JWA">
    <property type="method" value="X-ray"/>
    <property type="resolution" value="1.78 A"/>
    <property type="chains" value="A=1-335"/>
</dbReference>
<dbReference type="PDB" id="6L1Z">
    <property type="method" value="X-ray"/>
    <property type="resolution" value="1.91 A"/>
    <property type="chains" value="A=1-335"/>
</dbReference>
<dbReference type="PDB" id="6L21">
    <property type="method" value="X-ray"/>
    <property type="resolution" value="2.05 A"/>
    <property type="chains" value="A=1-335"/>
</dbReference>
<dbReference type="PDB" id="6L22">
    <property type="method" value="X-ray"/>
    <property type="resolution" value="2.12 A"/>
    <property type="chains" value="A=1-335"/>
</dbReference>
<dbReference type="PDB" id="6L23">
    <property type="method" value="X-ray"/>
    <property type="resolution" value="1.97 A"/>
    <property type="chains" value="A=1-335"/>
</dbReference>
<dbReference type="PDB" id="6L24">
    <property type="method" value="X-ray"/>
    <property type="resolution" value="2.40 A"/>
    <property type="chains" value="A=1-335"/>
</dbReference>
<dbReference type="PDB" id="6Q38">
    <property type="method" value="X-ray"/>
    <property type="resolution" value="1.74 A"/>
    <property type="chains" value="A=3-329"/>
</dbReference>
<dbReference type="PDB" id="6Q4Q">
    <property type="method" value="X-ray"/>
    <property type="resolution" value="1.45 A"/>
    <property type="chains" value="A/B=3-329"/>
</dbReference>
<dbReference type="PDB" id="6QY7">
    <property type="method" value="X-ray"/>
    <property type="resolution" value="2.10 A"/>
    <property type="chains" value="A/B=1-337"/>
</dbReference>
<dbReference type="PDB" id="6RB1">
    <property type="method" value="X-ray"/>
    <property type="resolution" value="1.50 A"/>
    <property type="chains" value="A=1-336"/>
</dbReference>
<dbReference type="PDB" id="6RCB">
    <property type="method" value="X-ray"/>
    <property type="resolution" value="2.05 A"/>
    <property type="chains" value="A=1-336"/>
</dbReference>
<dbReference type="PDB" id="6RCM">
    <property type="method" value="X-ray"/>
    <property type="resolution" value="1.70 A"/>
    <property type="chains" value="A=1-336"/>
</dbReference>
<dbReference type="PDB" id="6RFE">
    <property type="method" value="X-ray"/>
    <property type="resolution" value="1.54 A"/>
    <property type="chains" value="A=1-336"/>
</dbReference>
<dbReference type="PDB" id="6RFF">
    <property type="method" value="X-ray"/>
    <property type="resolution" value="1.80 A"/>
    <property type="chains" value="A=1-336"/>
</dbReference>
<dbReference type="PDB" id="6SPW">
    <property type="method" value="X-ray"/>
    <property type="resolution" value="1.60 A"/>
    <property type="chains" value="A=1-391"/>
</dbReference>
<dbReference type="PDB" id="6SPX">
    <property type="method" value="X-ray"/>
    <property type="resolution" value="1.99 A"/>
    <property type="chains" value="A=1-335"/>
</dbReference>
<dbReference type="PDB" id="6TEI">
    <property type="method" value="X-ray"/>
    <property type="resolution" value="1.76 A"/>
    <property type="chains" value="A/B=1-335"/>
</dbReference>
<dbReference type="PDB" id="6TLL">
    <property type="method" value="X-ray"/>
    <property type="resolution" value="1.88 A"/>
    <property type="chains" value="A=1-391"/>
</dbReference>
<dbReference type="PDB" id="6TLO">
    <property type="method" value="X-ray"/>
    <property type="resolution" value="1.69 A"/>
    <property type="chains" value="A=1-391"/>
</dbReference>
<dbReference type="PDB" id="6TLP">
    <property type="method" value="X-ray"/>
    <property type="resolution" value="1.93 A"/>
    <property type="chains" value="A=1-391"/>
</dbReference>
<dbReference type="PDB" id="6TLR">
    <property type="method" value="X-ray"/>
    <property type="resolution" value="1.64 A"/>
    <property type="chains" value="A=1-391"/>
</dbReference>
<dbReference type="PDB" id="6TLS">
    <property type="method" value="X-ray"/>
    <property type="resolution" value="1.46 A"/>
    <property type="chains" value="A=1-391"/>
</dbReference>
<dbReference type="PDB" id="6TLU">
    <property type="method" value="X-ray"/>
    <property type="resolution" value="1.81 A"/>
    <property type="chains" value="AAA=1-391"/>
</dbReference>
<dbReference type="PDB" id="6TLV">
    <property type="method" value="X-ray"/>
    <property type="resolution" value="1.67 A"/>
    <property type="chains" value="A=1-391"/>
</dbReference>
<dbReference type="PDB" id="6TLW">
    <property type="method" value="X-ray"/>
    <property type="resolution" value="1.73 A"/>
    <property type="chains" value="A=1-391"/>
</dbReference>
<dbReference type="PDB" id="6YPG">
    <property type="method" value="X-ray"/>
    <property type="resolution" value="1.51 A"/>
    <property type="chains" value="A=2-329"/>
</dbReference>
<dbReference type="PDB" id="6YPH">
    <property type="method" value="X-ray"/>
    <property type="resolution" value="1.67 A"/>
    <property type="chains" value="A/B=2-329"/>
</dbReference>
<dbReference type="PDB" id="6YPJ">
    <property type="method" value="X-ray"/>
    <property type="resolution" value="1.64 A"/>
    <property type="chains" value="A=2-329"/>
</dbReference>
<dbReference type="PDB" id="6YPK">
    <property type="method" value="X-ray"/>
    <property type="resolution" value="1.79 A"/>
    <property type="chains" value="A=2-329"/>
</dbReference>
<dbReference type="PDB" id="6YPN">
    <property type="method" value="X-ray"/>
    <property type="resolution" value="1.58 A"/>
    <property type="chains" value="B=1-329"/>
</dbReference>
<dbReference type="PDB" id="6YUL">
    <property type="method" value="X-ray"/>
    <property type="resolution" value="2.40 A"/>
    <property type="chains" value="AAA/GGG=1-391"/>
</dbReference>
<dbReference type="PDB" id="6YUM">
    <property type="method" value="X-ray"/>
    <property type="resolution" value="2.75 A"/>
    <property type="chains" value="AAA/GGG=1-391"/>
</dbReference>
<dbReference type="PDB" id="6YZH">
    <property type="method" value="X-ray"/>
    <property type="resolution" value="1.19 A"/>
    <property type="chains" value="A=3-329"/>
</dbReference>
<dbReference type="PDB" id="6Z19">
    <property type="method" value="X-ray"/>
    <property type="resolution" value="1.47 A"/>
    <property type="chains" value="B=2-329"/>
</dbReference>
<dbReference type="PDB" id="6Z83">
    <property type="method" value="X-ray"/>
    <property type="resolution" value="2.17 A"/>
    <property type="chains" value="AAA/BBB=1-337"/>
</dbReference>
<dbReference type="PDB" id="6Z84">
    <property type="method" value="X-ray"/>
    <property type="resolution" value="2.50 A"/>
    <property type="chains" value="AAA/BBB=1-337"/>
</dbReference>
<dbReference type="PDB" id="7A49">
    <property type="method" value="X-ray"/>
    <property type="resolution" value="2.03 A"/>
    <property type="chains" value="A/B=1-335"/>
</dbReference>
<dbReference type="PDB" id="7A4B">
    <property type="method" value="X-ray"/>
    <property type="resolution" value="2.06 A"/>
    <property type="chains" value="A/B=1-335"/>
</dbReference>
<dbReference type="PDB" id="7A4C">
    <property type="method" value="X-ray"/>
    <property type="resolution" value="2.50 A"/>
    <property type="chains" value="A/B=1-335"/>
</dbReference>
<dbReference type="PDB" id="7A4Q">
    <property type="method" value="X-ray"/>
    <property type="resolution" value="1.42 A"/>
    <property type="chains" value="A=3-329"/>
</dbReference>
<dbReference type="PDB" id="7AT5">
    <property type="method" value="X-ray"/>
    <property type="resolution" value="1.77 A"/>
    <property type="chains" value="A/B=1-335"/>
</dbReference>
<dbReference type="PDB" id="7AY9">
    <property type="method" value="X-ray"/>
    <property type="resolution" value="2.25 A"/>
    <property type="chains" value="A/B=1-336"/>
</dbReference>
<dbReference type="PDB" id="7AYA">
    <property type="method" value="X-ray"/>
    <property type="resolution" value="2.45 A"/>
    <property type="chains" value="A/B=1-336"/>
</dbReference>
<dbReference type="PDB" id="7B8H">
    <property type="method" value="X-ray"/>
    <property type="resolution" value="1.34 A"/>
    <property type="chains" value="A=1-335"/>
</dbReference>
<dbReference type="PDB" id="7B8I">
    <property type="method" value="X-ray"/>
    <property type="resolution" value="2.55 A"/>
    <property type="chains" value="A/B=1-335"/>
</dbReference>
<dbReference type="PDB" id="7BU4">
    <property type="method" value="X-ray"/>
    <property type="resolution" value="1.70 A"/>
    <property type="chains" value="A=1-335"/>
</dbReference>
<dbReference type="PDB" id="7L1X">
    <property type="method" value="X-ray"/>
    <property type="resolution" value="1.80 A"/>
    <property type="chains" value="A=2-335"/>
</dbReference>
<dbReference type="PDB" id="7PSU">
    <property type="method" value="X-ray"/>
    <property type="resolution" value="1.77 A"/>
    <property type="chains" value="A/B=1-391"/>
</dbReference>
<dbReference type="PDB" id="7QGB">
    <property type="method" value="X-ray"/>
    <property type="resolution" value="2.58 A"/>
    <property type="chains" value="A=1-391"/>
</dbReference>
<dbReference type="PDB" id="7QGC">
    <property type="method" value="X-ray"/>
    <property type="resolution" value="2.55 A"/>
    <property type="chains" value="A=1-391"/>
</dbReference>
<dbReference type="PDB" id="7QGD">
    <property type="method" value="X-ray"/>
    <property type="resolution" value="2.30 A"/>
    <property type="chains" value="A=1-391"/>
</dbReference>
<dbReference type="PDB" id="7QGE">
    <property type="method" value="X-ray"/>
    <property type="resolution" value="2.27 A"/>
    <property type="chains" value="A=1-391"/>
</dbReference>
<dbReference type="PDB" id="7QUX">
    <property type="method" value="X-ray"/>
    <property type="resolution" value="1.48 A"/>
    <property type="chains" value="A=2-329"/>
</dbReference>
<dbReference type="PDB" id="7X4H">
    <property type="method" value="X-ray"/>
    <property type="resolution" value="1.77 A"/>
    <property type="chains" value="A=1-335"/>
</dbReference>
<dbReference type="PDB" id="7Z39">
    <property type="method" value="X-ray"/>
    <property type="resolution" value="1.60 A"/>
    <property type="chains" value="A=2-329"/>
</dbReference>
<dbReference type="PDB" id="7ZWE">
    <property type="method" value="X-ray"/>
    <property type="resolution" value="1.47 A"/>
    <property type="chains" value="A=3-329"/>
</dbReference>
<dbReference type="PDB" id="7ZWG">
    <property type="method" value="X-ray"/>
    <property type="resolution" value="1.31 A"/>
    <property type="chains" value="A=2-329"/>
</dbReference>
<dbReference type="PDB" id="7ZY0">
    <property type="method" value="X-ray"/>
    <property type="resolution" value="1.44 A"/>
    <property type="chains" value="A=2-329"/>
</dbReference>
<dbReference type="PDB" id="7ZY2">
    <property type="method" value="X-ray"/>
    <property type="resolution" value="1.51 A"/>
    <property type="chains" value="A=2-329"/>
</dbReference>
<dbReference type="PDB" id="7ZY5">
    <property type="method" value="X-ray"/>
    <property type="resolution" value="1.82 A"/>
    <property type="chains" value="A/B=2-329"/>
</dbReference>
<dbReference type="PDB" id="7ZY8">
    <property type="method" value="X-ray"/>
    <property type="resolution" value="1.85 A"/>
    <property type="chains" value="A/B=2-329"/>
</dbReference>
<dbReference type="PDB" id="7ZYD">
    <property type="method" value="X-ray"/>
    <property type="resolution" value="1.40 A"/>
    <property type="chains" value="A=2-329"/>
</dbReference>
<dbReference type="PDB" id="7ZYK">
    <property type="method" value="X-ray"/>
    <property type="resolution" value="1.31 A"/>
    <property type="chains" value="A=2-329"/>
</dbReference>
<dbReference type="PDB" id="7ZYO">
    <property type="method" value="X-ray"/>
    <property type="resolution" value="1.58 A"/>
    <property type="chains" value="A=2-329"/>
</dbReference>
<dbReference type="PDB" id="7ZYR">
    <property type="method" value="X-ray"/>
    <property type="resolution" value="1.85 A"/>
    <property type="chains" value="A=2-329"/>
</dbReference>
<dbReference type="PDB" id="8AE7">
    <property type="method" value="X-ray"/>
    <property type="resolution" value="1.28 A"/>
    <property type="chains" value="A=2-329"/>
</dbReference>
<dbReference type="PDB" id="8AEC">
    <property type="method" value="X-ray"/>
    <property type="resolution" value="1.09 A"/>
    <property type="chains" value="A=2-329"/>
</dbReference>
<dbReference type="PDB" id="8AEK">
    <property type="method" value="X-ray"/>
    <property type="resolution" value="1.65 A"/>
    <property type="chains" value="A=2-329"/>
</dbReference>
<dbReference type="PDB" id="8AEM">
    <property type="method" value="X-ray"/>
    <property type="resolution" value="1.60 A"/>
    <property type="chains" value="A=2-329"/>
</dbReference>
<dbReference type="PDB" id="8BGC">
    <property type="method" value="X-ray"/>
    <property type="resolution" value="2.80 A"/>
    <property type="chains" value="A/B=1-337"/>
</dbReference>
<dbReference type="PDB" id="8C5Q">
    <property type="method" value="X-ray"/>
    <property type="resolution" value="2.50 A"/>
    <property type="chains" value="A/B=1-337"/>
</dbReference>
<dbReference type="PDB" id="8C6L">
    <property type="method" value="X-ray"/>
    <property type="resolution" value="1.80 A"/>
    <property type="chains" value="A=1-336"/>
</dbReference>
<dbReference type="PDB" id="8C6M">
    <property type="method" value="X-ray"/>
    <property type="resolution" value="1.80 A"/>
    <property type="chains" value="A=1-336"/>
</dbReference>
<dbReference type="PDB" id="8C6N">
    <property type="method" value="X-ray"/>
    <property type="resolution" value="2.05 A"/>
    <property type="chains" value="A=1-336"/>
</dbReference>
<dbReference type="PDB" id="8P05">
    <property type="method" value="X-ray"/>
    <property type="resolution" value="2.45 A"/>
    <property type="chains" value="A/B=1-337"/>
</dbReference>
<dbReference type="PDB" id="8P06">
    <property type="method" value="X-ray"/>
    <property type="resolution" value="2.40 A"/>
    <property type="chains" value="A/B=1-337"/>
</dbReference>
<dbReference type="PDB" id="8P07">
    <property type="method" value="X-ray"/>
    <property type="resolution" value="2.40 A"/>
    <property type="chains" value="A/B=1-337"/>
</dbReference>
<dbReference type="PDB" id="8PVO">
    <property type="method" value="X-ray"/>
    <property type="resolution" value="2.25 A"/>
    <property type="chains" value="A/B=1-337"/>
</dbReference>
<dbReference type="PDB" id="8PVP">
    <property type="method" value="X-ray"/>
    <property type="resolution" value="2.60 A"/>
    <property type="chains" value="A/B=1-337"/>
</dbReference>
<dbReference type="PDB" id="8QQB">
    <property type="method" value="X-ray"/>
    <property type="resolution" value="2.26 A"/>
    <property type="chains" value="A/B=1-335"/>
</dbReference>
<dbReference type="PDB" id="8QWY">
    <property type="method" value="X-ray"/>
    <property type="resolution" value="2.60 A"/>
    <property type="chains" value="A/B=1-337"/>
</dbReference>
<dbReference type="PDB" id="8QWZ">
    <property type="method" value="X-ray"/>
    <property type="resolution" value="2.60 A"/>
    <property type="chains" value="A/B=1-337"/>
</dbReference>
<dbReference type="PDB" id="9EPV">
    <property type="method" value="X-ray"/>
    <property type="resolution" value="2.30 A"/>
    <property type="chains" value="A/B=1-337"/>
</dbReference>
<dbReference type="PDB" id="9EPW">
    <property type="method" value="X-ray"/>
    <property type="resolution" value="2.30 A"/>
    <property type="chains" value="B=1-337"/>
</dbReference>
<dbReference type="PDB" id="9EPX">
    <property type="method" value="X-ray"/>
    <property type="resolution" value="2.60 A"/>
    <property type="chains" value="A/B=1-337"/>
</dbReference>
<dbReference type="PDB" id="9EPY">
    <property type="method" value="X-ray"/>
    <property type="resolution" value="2.65 A"/>
    <property type="chains" value="A/B=1-337"/>
</dbReference>
<dbReference type="PDB" id="9EPZ">
    <property type="method" value="X-ray"/>
    <property type="resolution" value="2.65 A"/>
    <property type="chains" value="A/B=1-337"/>
</dbReference>
<dbReference type="PDB" id="9EQ0">
    <property type="method" value="X-ray"/>
    <property type="resolution" value="3.15 A"/>
    <property type="chains" value="A/B=1-337"/>
</dbReference>
<dbReference type="PDB" id="9EQ1">
    <property type="method" value="X-ray"/>
    <property type="resolution" value="3.00 A"/>
    <property type="chains" value="A/B=1-337"/>
</dbReference>
<dbReference type="PDB" id="9EZG">
    <property type="method" value="X-ray"/>
    <property type="resolution" value="2.18 A"/>
    <property type="chains" value="A/B=1-337"/>
</dbReference>
<dbReference type="PDB" id="9FYF">
    <property type="method" value="X-ray"/>
    <property type="resolution" value="2.70 A"/>
    <property type="chains" value="A/B=1-337"/>
</dbReference>
<dbReference type="PDB" id="9I0Z">
    <property type="method" value="X-ray"/>
    <property type="resolution" value="1.55 A"/>
    <property type="chains" value="A=3-330"/>
</dbReference>
<dbReference type="PDB" id="9I10">
    <property type="method" value="X-ray"/>
    <property type="resolution" value="1.50 A"/>
    <property type="chains" value="A=3-330"/>
</dbReference>
<dbReference type="PDB" id="9I11">
    <property type="method" value="X-ray"/>
    <property type="resolution" value="1.60 A"/>
    <property type="chains" value="A=3-330"/>
</dbReference>
<dbReference type="PDB" id="9I12">
    <property type="method" value="X-ray"/>
    <property type="resolution" value="2.00 A"/>
    <property type="chains" value="A=3-330"/>
</dbReference>
<dbReference type="PDB" id="9I13">
    <property type="method" value="X-ray"/>
    <property type="resolution" value="1.75 A"/>
    <property type="chains" value="A=3-330"/>
</dbReference>
<dbReference type="PDB" id="9I17">
    <property type="method" value="X-ray"/>
    <property type="resolution" value="1.55 A"/>
    <property type="chains" value="A=3-330"/>
</dbReference>
<dbReference type="PDBsum" id="1JWH"/>
<dbReference type="PDBsum" id="1NA7"/>
<dbReference type="PDBsum" id="1PJK"/>
<dbReference type="PDBsum" id="2PVR"/>
<dbReference type="PDBsum" id="2ZJW"/>
<dbReference type="PDBsum" id="3AMY"/>
<dbReference type="PDBsum" id="3AT2"/>
<dbReference type="PDBsum" id="3AT3"/>
<dbReference type="PDBsum" id="3AT4"/>
<dbReference type="PDBsum" id="3AXW"/>
<dbReference type="PDBsum" id="3BQC"/>
<dbReference type="PDBsum" id="3C13"/>
<dbReference type="PDBsum" id="3FWQ"/>
<dbReference type="PDBsum" id="3H30"/>
<dbReference type="PDBsum" id="3JUH"/>
<dbReference type="PDBsum" id="3MB6"/>
<dbReference type="PDBsum" id="3MB7"/>
<dbReference type="PDBsum" id="3NGA"/>
<dbReference type="PDBsum" id="3NSZ"/>
<dbReference type="PDBsum" id="3OWJ"/>
<dbReference type="PDBsum" id="3OWK"/>
<dbReference type="PDBsum" id="3OWL"/>
<dbReference type="PDBsum" id="3PE1"/>
<dbReference type="PDBsum" id="3PE2"/>
<dbReference type="PDBsum" id="3PE4"/>
<dbReference type="PDBsum" id="3Q04"/>
<dbReference type="PDBsum" id="3Q9W"/>
<dbReference type="PDBsum" id="3Q9X"/>
<dbReference type="PDBsum" id="3Q9Y"/>
<dbReference type="PDBsum" id="3Q9Z"/>
<dbReference type="PDBsum" id="3QA0"/>
<dbReference type="PDBsum" id="3R0T"/>
<dbReference type="PDBsum" id="3RPS"/>
<dbReference type="PDBsum" id="3TAX"/>
<dbReference type="PDBsum" id="3U4U"/>
<dbReference type="PDBsum" id="3U87"/>
<dbReference type="PDBsum" id="3U9C"/>
<dbReference type="PDBsum" id="3W8L"/>
<dbReference type="PDBsum" id="3WAR"/>
<dbReference type="PDBsum" id="3WIK"/>
<dbReference type="PDBsum" id="3WIL"/>
<dbReference type="PDBsum" id="3WOW"/>
<dbReference type="PDBsum" id="4DGL"/>
<dbReference type="PDBsum" id="4FBX"/>
<dbReference type="PDBsum" id="4GRB"/>
<dbReference type="PDBsum" id="4GUB"/>
<dbReference type="PDBsum" id="4GYW"/>
<dbReference type="PDBsum" id="4GYY"/>
<dbReference type="PDBsum" id="4GZ3"/>
<dbReference type="PDBsum" id="4IB5"/>
<dbReference type="PDBsum" id="4KWP"/>
<dbReference type="PDBsum" id="4MD7"/>
<dbReference type="PDBsum" id="4MD8"/>
<dbReference type="PDBsum" id="4MD9"/>
<dbReference type="PDBsum" id="4NH1"/>
<dbReference type="PDBsum" id="4RLL"/>
<dbReference type="PDBsum" id="4UB7"/>
<dbReference type="PDBsum" id="4UBA"/>
<dbReference type="PDBsum" id="5B0X"/>
<dbReference type="PDBsum" id="5CLP"/>
<dbReference type="PDBsum" id="5CQU"/>
<dbReference type="PDBsum" id="5CQW"/>
<dbReference type="PDBsum" id="5CS6"/>
<dbReference type="PDBsum" id="5CSH"/>
<dbReference type="PDBsum" id="5CSP"/>
<dbReference type="PDBsum" id="5CSV"/>
<dbReference type="PDBsum" id="5CT0"/>
<dbReference type="PDBsum" id="5CTP"/>
<dbReference type="PDBsum" id="5CU0"/>
<dbReference type="PDBsum" id="5CU2"/>
<dbReference type="PDBsum" id="5CU3"/>
<dbReference type="PDBsum" id="5CU4"/>
<dbReference type="PDBsum" id="5CU6"/>
<dbReference type="PDBsum" id="5CVF"/>
<dbReference type="PDBsum" id="5CVG"/>
<dbReference type="PDBsum" id="5CVH"/>
<dbReference type="PDBsum" id="5CX9"/>
<dbReference type="PDBsum" id="5H8B"/>
<dbReference type="PDBsum" id="5H8E"/>
<dbReference type="PDBsum" id="5H8G"/>
<dbReference type="PDBsum" id="5HGV"/>
<dbReference type="PDBsum" id="5KU8"/>
<dbReference type="PDBsum" id="5KWH"/>
<dbReference type="PDBsum" id="5M44"/>
<dbReference type="PDBsum" id="5M4C"/>
<dbReference type="PDBsum" id="5M4F"/>
<dbReference type="PDBsum" id="5M4I"/>
<dbReference type="PDBsum" id="5MMF"/>
<dbReference type="PDBsum" id="5MMR"/>
<dbReference type="PDBsum" id="5MO5"/>
<dbReference type="PDBsum" id="5MO6"/>
<dbReference type="PDBsum" id="5MO7"/>
<dbReference type="PDBsum" id="5MO8"/>
<dbReference type="PDBsum" id="5MOD"/>
<dbReference type="PDBsum" id="5MOE"/>
<dbReference type="PDBsum" id="5MOH"/>
<dbReference type="PDBsum" id="5MOT"/>
<dbReference type="PDBsum" id="5MOV"/>
<dbReference type="PDBsum" id="5MOW"/>
<dbReference type="PDBsum" id="5MP8"/>
<dbReference type="PDBsum" id="5MPJ"/>
<dbReference type="PDBsum" id="5N1V"/>
<dbReference type="PDBsum" id="5N9K"/>
<dbReference type="PDBsum" id="5N9L"/>
<dbReference type="PDBsum" id="5N9N"/>
<dbReference type="PDBsum" id="5NQC"/>
<dbReference type="PDBsum" id="5OMY"/>
<dbReference type="PDBsum" id="5ONI"/>
<dbReference type="PDBsum" id="5OQU"/>
<dbReference type="PDBsum" id="5ORH"/>
<dbReference type="PDBsum" id="5ORJ"/>
<dbReference type="PDBsum" id="5ORK"/>
<dbReference type="PDBsum" id="5OS7"/>
<dbReference type="PDBsum" id="5OS8"/>
<dbReference type="PDBsum" id="5OSL"/>
<dbReference type="PDBsum" id="5OSP"/>
<dbReference type="PDBsum" id="5OSR"/>
<dbReference type="PDBsum" id="5OSU"/>
<dbReference type="PDBsum" id="5OSZ"/>
<dbReference type="PDBsum" id="5OT5"/>
<dbReference type="PDBsum" id="5OT6"/>
<dbReference type="PDBsum" id="5OTD"/>
<dbReference type="PDBsum" id="5OTH"/>
<dbReference type="PDBsum" id="5OTI"/>
<dbReference type="PDBsum" id="5OTL"/>
<dbReference type="PDBsum" id="5OTO"/>
<dbReference type="PDBsum" id="5OTP"/>
<dbReference type="PDBsum" id="5OTQ"/>
<dbReference type="PDBsum" id="5OTR"/>
<dbReference type="PDBsum" id="5OTS"/>
<dbReference type="PDBsum" id="5OTY"/>
<dbReference type="PDBsum" id="5OTZ"/>
<dbReference type="PDBsum" id="5OUE"/>
<dbReference type="PDBsum" id="5OUL"/>
<dbReference type="PDBsum" id="5OUM"/>
<dbReference type="PDBsum" id="5OUU"/>
<dbReference type="PDBsum" id="5OWH"/>
<dbReference type="PDBsum" id="5OWL"/>
<dbReference type="PDBsum" id="5OYF"/>
<dbReference type="PDBsum" id="5T1H"/>
<dbReference type="PDBsum" id="5VIE"/>
<dbReference type="PDBsum" id="5VIF"/>
<dbReference type="PDBsum" id="5ZN0"/>
<dbReference type="PDBsum" id="5ZN1"/>
<dbReference type="PDBsum" id="5ZN2"/>
<dbReference type="PDBsum" id="5ZN3"/>
<dbReference type="PDBsum" id="5ZN4"/>
<dbReference type="PDBsum" id="5ZN5"/>
<dbReference type="PDBsum" id="6A1C"/>
<dbReference type="PDBsum" id="6E37"/>
<dbReference type="PDBsum" id="6EHK"/>
<dbReference type="PDBsum" id="6EHU"/>
<dbReference type="PDBsum" id="6EII"/>
<dbReference type="PDBsum" id="6FVF"/>
<dbReference type="PDBsum" id="6FVG"/>
<dbReference type="PDBsum" id="6GIH"/>
<dbReference type="PDBsum" id="6GMD"/>
<dbReference type="PDBsum" id="6HBN"/>
<dbReference type="PDBsum" id="6HME"/>
<dbReference type="PDBsum" id="6HNW"/>
<dbReference type="PDBsum" id="6HNY"/>
<dbReference type="PDBsum" id="6HOP"/>
<dbReference type="PDBsum" id="6HOQ"/>
<dbReference type="PDBsum" id="6HOR"/>
<dbReference type="PDBsum" id="6HOT"/>
<dbReference type="PDBsum" id="6HOU"/>
<dbReference type="PDBsum" id="6JWA"/>
<dbReference type="PDBsum" id="6L1Z"/>
<dbReference type="PDBsum" id="6L21"/>
<dbReference type="PDBsum" id="6L22"/>
<dbReference type="PDBsum" id="6L23"/>
<dbReference type="PDBsum" id="6L24"/>
<dbReference type="PDBsum" id="6Q38"/>
<dbReference type="PDBsum" id="6Q4Q"/>
<dbReference type="PDBsum" id="6QY7"/>
<dbReference type="PDBsum" id="6RB1"/>
<dbReference type="PDBsum" id="6RCB"/>
<dbReference type="PDBsum" id="6RCM"/>
<dbReference type="PDBsum" id="6RFE"/>
<dbReference type="PDBsum" id="6RFF"/>
<dbReference type="PDBsum" id="6SPW"/>
<dbReference type="PDBsum" id="6SPX"/>
<dbReference type="PDBsum" id="6TEI"/>
<dbReference type="PDBsum" id="6TLL"/>
<dbReference type="PDBsum" id="6TLO"/>
<dbReference type="PDBsum" id="6TLP"/>
<dbReference type="PDBsum" id="6TLR"/>
<dbReference type="PDBsum" id="6TLS"/>
<dbReference type="PDBsum" id="6TLU"/>
<dbReference type="PDBsum" id="6TLV"/>
<dbReference type="PDBsum" id="6TLW"/>
<dbReference type="PDBsum" id="6YPG"/>
<dbReference type="PDBsum" id="6YPH"/>
<dbReference type="PDBsum" id="6YPJ"/>
<dbReference type="PDBsum" id="6YPK"/>
<dbReference type="PDBsum" id="6YPN"/>
<dbReference type="PDBsum" id="6YUL"/>
<dbReference type="PDBsum" id="6YUM"/>
<dbReference type="PDBsum" id="6YZH"/>
<dbReference type="PDBsum" id="6Z19"/>
<dbReference type="PDBsum" id="6Z83"/>
<dbReference type="PDBsum" id="6Z84"/>
<dbReference type="PDBsum" id="7A49"/>
<dbReference type="PDBsum" id="7A4B"/>
<dbReference type="PDBsum" id="7A4C"/>
<dbReference type="PDBsum" id="7A4Q"/>
<dbReference type="PDBsum" id="7AT5"/>
<dbReference type="PDBsum" id="7AY9"/>
<dbReference type="PDBsum" id="7AYA"/>
<dbReference type="PDBsum" id="7B8H"/>
<dbReference type="PDBsum" id="7B8I"/>
<dbReference type="PDBsum" id="7BU4"/>
<dbReference type="PDBsum" id="7L1X"/>
<dbReference type="PDBsum" id="7PSU"/>
<dbReference type="PDBsum" id="7QGB"/>
<dbReference type="PDBsum" id="7QGC"/>
<dbReference type="PDBsum" id="7QGD"/>
<dbReference type="PDBsum" id="7QGE"/>
<dbReference type="PDBsum" id="7QUX"/>
<dbReference type="PDBsum" id="7X4H"/>
<dbReference type="PDBsum" id="7Z39"/>
<dbReference type="PDBsum" id="7ZWE"/>
<dbReference type="PDBsum" id="7ZWG"/>
<dbReference type="PDBsum" id="7ZY0"/>
<dbReference type="PDBsum" id="7ZY2"/>
<dbReference type="PDBsum" id="7ZY5"/>
<dbReference type="PDBsum" id="7ZY8"/>
<dbReference type="PDBsum" id="7ZYD"/>
<dbReference type="PDBsum" id="7ZYK"/>
<dbReference type="PDBsum" id="7ZYO"/>
<dbReference type="PDBsum" id="7ZYR"/>
<dbReference type="PDBsum" id="8AE7"/>
<dbReference type="PDBsum" id="8AEC"/>
<dbReference type="PDBsum" id="8AEK"/>
<dbReference type="PDBsum" id="8AEM"/>
<dbReference type="PDBsum" id="8BGC"/>
<dbReference type="PDBsum" id="8C5Q"/>
<dbReference type="PDBsum" id="8C6L"/>
<dbReference type="PDBsum" id="8C6M"/>
<dbReference type="PDBsum" id="8C6N"/>
<dbReference type="PDBsum" id="8P05"/>
<dbReference type="PDBsum" id="8P06"/>
<dbReference type="PDBsum" id="8P07"/>
<dbReference type="PDBsum" id="8PVO"/>
<dbReference type="PDBsum" id="8PVP"/>
<dbReference type="PDBsum" id="8QQB"/>
<dbReference type="PDBsum" id="8QWY"/>
<dbReference type="PDBsum" id="8QWZ"/>
<dbReference type="PDBsum" id="9EPV"/>
<dbReference type="PDBsum" id="9EPW"/>
<dbReference type="PDBsum" id="9EPX"/>
<dbReference type="PDBsum" id="9EPY"/>
<dbReference type="PDBsum" id="9EPZ"/>
<dbReference type="PDBsum" id="9EQ0"/>
<dbReference type="PDBsum" id="9EQ1"/>
<dbReference type="PDBsum" id="9EZG"/>
<dbReference type="PDBsum" id="9FYF"/>
<dbReference type="PDBsum" id="9I0Z"/>
<dbReference type="PDBsum" id="9I10"/>
<dbReference type="PDBsum" id="9I11"/>
<dbReference type="PDBsum" id="9I12"/>
<dbReference type="PDBsum" id="9I13"/>
<dbReference type="PDBsum" id="9I17"/>
<dbReference type="SASBDB" id="P68400"/>
<dbReference type="SMR" id="P68400"/>
<dbReference type="BioGRID" id="107841">
    <property type="interactions" value="917"/>
</dbReference>
<dbReference type="ComplexPortal" id="CPX-2437">
    <property type="entry name" value="Casein kinase II complex, CSNK2A1-CNSK2A2 variant"/>
</dbReference>
<dbReference type="ComplexPortal" id="CPX-914">
    <property type="entry name" value="Casein kinase II complex, CSNK2A1 variant"/>
</dbReference>
<dbReference type="CORUM" id="P68400"/>
<dbReference type="DIP" id="DIP-32682N"/>
<dbReference type="FunCoup" id="P68400">
    <property type="interactions" value="4327"/>
</dbReference>
<dbReference type="IntAct" id="P68400">
    <property type="interactions" value="626"/>
</dbReference>
<dbReference type="MINT" id="P68400"/>
<dbReference type="STRING" id="9606.ENSP00000217244"/>
<dbReference type="BindingDB" id="P68400"/>
<dbReference type="ChEMBL" id="CHEMBL3629"/>
<dbReference type="DrugBank" id="DB01765">
    <property type="generic name" value="(5-hydroxyindolo[1,2-a]quinazolin-7-yl)acetic acid"/>
</dbReference>
<dbReference type="DrugBank" id="DB03035">
    <property type="generic name" value="1,8-Di-Hydroxy-4-Nitro-Anthraquinone"/>
</dbReference>
<dbReference type="DrugBank" id="DB02170">
    <property type="generic name" value="1,8-Di-Hydroxy-4-Nitro-Xanthen-9-One"/>
</dbReference>
<dbReference type="DrugBank" id="DB08338">
    <property type="generic name" value="19-(cyclopropylamino)-4,6,7,15-tetrahydro-5H-16,1-(azenometheno)-10,14-(metheno)pyrazolo[4,3-o][1,3,9]triazacyclohexadecin-8(9H)-one"/>
</dbReference>
<dbReference type="DrugBank" id="DB08354">
    <property type="generic name" value="2-(4-CHLOROBENZYLAMINO)-4-(PHENYLAMINO)PYRAZOLO[1,5-A][1,3,5]TRIAZINE-8-CARBONITRILE"/>
</dbReference>
<dbReference type="DrugBank" id="DB08360">
    <property type="generic name" value="2-(4-ETHYLPIPERAZIN-1-YL)-4-(PHENYLAMINO)PYRAZOLO[1,5-A][1,3,5]TRIAZINE-8-CARBONITRILE"/>
</dbReference>
<dbReference type="DrugBank" id="DB08353">
    <property type="generic name" value="2-(CYCLOHEXYLMETHYLAMINO)-4-(PHENYLAMINO)PYRAZOLO[1,5-A][1,3,5]TRIAZINE-8-CARBONITRILE"/>
</dbReference>
<dbReference type="DrugBank" id="DB07802">
    <property type="generic name" value="3,8-DIBROMO-7-HYDROXY-4-METHYL-2H-CHROMEN-2-ONE"/>
</dbReference>
<dbReference type="DrugBank" id="DB08345">
    <property type="generic name" value="4-(2-(1H-IMIDAZOL-4-YL)ETHYLAMINO)-2-(PHENYLAMINO)PYRAZOLO[1,5-A][1,3,5]TRIAZINE-8-CARBONITRILE"/>
</dbReference>
<dbReference type="DrugBank" id="DB03924">
    <property type="generic name" value="5,8-Di-Amino-1,4-Dihydroxy-Anthraquinone"/>
</dbReference>
<dbReference type="DrugBank" id="DB07352">
    <property type="generic name" value="Apigenin"/>
</dbReference>
<dbReference type="DrugBank" id="DB00171">
    <property type="generic name" value="ATP"/>
</dbReference>
<dbReference type="DrugBank" id="DB03127">
    <property type="generic name" value="Benzamidine"/>
</dbReference>
<dbReference type="DrugBank" id="DB08473">
    <property type="generic name" value="Dichlororibofuranosylbenzimidazole"/>
</dbReference>
<dbReference type="DrugBank" id="DB04719">
    <property type="generic name" value="DIMETHYL-(4,5,6,7-TETRABROMO-1H-BENZOIMIDAZOL-2-YL)-AMINE"/>
</dbReference>
<dbReference type="DrugBank" id="DB08846">
    <property type="generic name" value="Ellagic acid"/>
</dbReference>
<dbReference type="DrugBank" id="DB07715">
    <property type="generic name" value="Emodin"/>
</dbReference>
<dbReference type="DrugBank" id="DB12010">
    <property type="generic name" value="Fostamatinib"/>
</dbReference>
<dbReference type="DrugBank" id="DB08340">
    <property type="generic name" value="N,N'-DIPHENYLPYRAZOLO[1,5-A][1,3,5]TRIAZINE-2,4-DIAMINE"/>
</dbReference>
<dbReference type="DrugBank" id="DB08362">
    <property type="generic name" value="N-(3-(8-CYANO-4-(PHENYLAMINO)PYRAZOLO[1,5-A][1,3,5]TRIAZIN-2-YLAMINO)PHENYL)ACETAMIDE"/>
</dbReference>
<dbReference type="DrugBank" id="DB04721">
    <property type="generic name" value="N1,N2-ETHYLENE-2-METHYLAMINO-4,5,6,7-TETRABROMO-BENZIMIDAZOLE"/>
</dbReference>
<dbReference type="DrugBank" id="DB04395">
    <property type="generic name" value="Phosphoaminophosphonic Acid-Adenylate Ester"/>
</dbReference>
<dbReference type="DrugBank" id="DB04216">
    <property type="generic name" value="Quercetin"/>
</dbReference>
<dbReference type="DrugBank" id="DB08660">
    <property type="generic name" value="Quinalizarin"/>
</dbReference>
<dbReference type="DrugBank" id="DB02709">
    <property type="generic name" value="Resveratrol"/>
</dbReference>
<dbReference type="DrugBank" id="DB04720">
    <property type="generic name" value="S-METHYL-4,5,6,7-TETRABROMO-BENZIMIDAZOLE"/>
</dbReference>
<dbReference type="DrugBank" id="DB15408">
    <property type="generic name" value="Silmitasertib"/>
</dbReference>
<dbReference type="DrugBank" id="DB04462">
    <property type="generic name" value="Tetrabromo-2-Benzotriazole"/>
</dbReference>
<dbReference type="DrugCentral" id="P68400"/>
<dbReference type="GuidetoPHARMACOLOGY" id="1549"/>
<dbReference type="MoonDB" id="P68400">
    <property type="type" value="Predicted"/>
</dbReference>
<dbReference type="GlyCosmos" id="P68400">
    <property type="glycosylation" value="3 sites, 1 glycan"/>
</dbReference>
<dbReference type="GlyGen" id="P68400">
    <property type="glycosylation" value="9 sites, 1 N-linked glycan (1 site), 1 O-linked glycan (3 sites)"/>
</dbReference>
<dbReference type="iPTMnet" id="P68400"/>
<dbReference type="MetOSite" id="P68400"/>
<dbReference type="PhosphoSitePlus" id="P68400"/>
<dbReference type="SwissPalm" id="P68400"/>
<dbReference type="BioMuta" id="CSNK2A1"/>
<dbReference type="DMDM" id="55977123"/>
<dbReference type="jPOST" id="P68400"/>
<dbReference type="MassIVE" id="P68400"/>
<dbReference type="PaxDb" id="9606-ENSP00000217244"/>
<dbReference type="PeptideAtlas" id="P68400"/>
<dbReference type="ProteomicsDB" id="57536">
    <molecule id="P68400-1"/>
</dbReference>
<dbReference type="ProteomicsDB" id="57537">
    <molecule id="P68400-2"/>
</dbReference>
<dbReference type="Pumba" id="P68400"/>
<dbReference type="Antibodypedia" id="6236">
    <property type="antibodies" value="764 antibodies from 43 providers"/>
</dbReference>
<dbReference type="DNASU" id="1457"/>
<dbReference type="YCharOS" id="P68400">
    <property type="antibodies" value="Tested 9 antibodies from 6 manufacturers"/>
</dbReference>
<dbReference type="Ensembl" id="ENST00000217244.9">
    <molecule id="P68400-1"/>
    <property type="protein sequence ID" value="ENSP00000217244.3"/>
    <property type="gene ID" value="ENSG00000101266.19"/>
</dbReference>
<dbReference type="Ensembl" id="ENST00000349736.10">
    <molecule id="P68400-2"/>
    <property type="protein sequence ID" value="ENSP00000339247.6"/>
    <property type="gene ID" value="ENSG00000101266.19"/>
</dbReference>
<dbReference type="Ensembl" id="ENST00000400217.7">
    <molecule id="P68400-1"/>
    <property type="protein sequence ID" value="ENSP00000383076.2"/>
    <property type="gene ID" value="ENSG00000101266.19"/>
</dbReference>
<dbReference type="Ensembl" id="ENST00000643660.1">
    <molecule id="P68400-1"/>
    <property type="protein sequence ID" value="ENSP00000495248.1"/>
    <property type="gene ID" value="ENSG00000101266.19"/>
</dbReference>
<dbReference type="Ensembl" id="ENST00000644003.1">
    <molecule id="P68400-2"/>
    <property type="protein sequence ID" value="ENSP00000495387.1"/>
    <property type="gene ID" value="ENSG00000101266.19"/>
</dbReference>
<dbReference type="Ensembl" id="ENST00000645623.1">
    <molecule id="P68400-1"/>
    <property type="protein sequence ID" value="ENSP00000495998.1"/>
    <property type="gene ID" value="ENSG00000101266.19"/>
</dbReference>
<dbReference type="Ensembl" id="ENST00000646305.1">
    <molecule id="P68400-1"/>
    <property type="protein sequence ID" value="ENSP00000495902.1"/>
    <property type="gene ID" value="ENSG00000101266.19"/>
</dbReference>
<dbReference type="Ensembl" id="ENST00000646477.1">
    <molecule id="P68400-2"/>
    <property type="protein sequence ID" value="ENSP00000495439.1"/>
    <property type="gene ID" value="ENSG00000101266.19"/>
</dbReference>
<dbReference type="Ensembl" id="ENST00000646561.1">
    <molecule id="P68400-1"/>
    <property type="protein sequence ID" value="ENSP00000496569.1"/>
    <property type="gene ID" value="ENSG00000101266.19"/>
</dbReference>
<dbReference type="Ensembl" id="ENST00000646814.1">
    <molecule id="P68400-1"/>
    <property type="protein sequence ID" value="ENSP00000495422.1"/>
    <property type="gene ID" value="ENSG00000101266.19"/>
</dbReference>
<dbReference type="Ensembl" id="ENST00000647348.1">
    <molecule id="P68400-1"/>
    <property type="protein sequence ID" value="ENSP00000495912.1"/>
    <property type="gene ID" value="ENSG00000101266.19"/>
</dbReference>
<dbReference type="GeneID" id="1457"/>
<dbReference type="KEGG" id="hsa:1457"/>
<dbReference type="MANE-Select" id="ENST00000217244.9">
    <property type="protein sequence ID" value="ENSP00000217244.3"/>
    <property type="RefSeq nucleotide sequence ID" value="NM_177559.3"/>
    <property type="RefSeq protein sequence ID" value="NP_808227.1"/>
</dbReference>
<dbReference type="UCSC" id="uc002wdw.2">
    <molecule id="P68400-1"/>
    <property type="organism name" value="human"/>
</dbReference>
<dbReference type="AGR" id="HGNC:2457"/>
<dbReference type="CTD" id="1457"/>
<dbReference type="DisGeNET" id="1457"/>
<dbReference type="GeneCards" id="CSNK2A1"/>
<dbReference type="GeneReviews" id="CSNK2A1"/>
<dbReference type="HGNC" id="HGNC:2457">
    <property type="gene designation" value="CSNK2A1"/>
</dbReference>
<dbReference type="HPA" id="ENSG00000101266">
    <property type="expression patterns" value="Low tissue specificity"/>
</dbReference>
<dbReference type="MalaCards" id="CSNK2A1"/>
<dbReference type="MIM" id="115440">
    <property type="type" value="gene"/>
</dbReference>
<dbReference type="MIM" id="617062">
    <property type="type" value="phenotype"/>
</dbReference>
<dbReference type="neXtProt" id="NX_P68400"/>
<dbReference type="OpenTargets" id="ENSG00000101266"/>
<dbReference type="Orphanet" id="528084">
    <property type="disease" value="Non-specific syndromic intellectual disability"/>
</dbReference>
<dbReference type="PharmGKB" id="PA26957"/>
<dbReference type="VEuPathDB" id="HostDB:ENSG00000101266"/>
<dbReference type="eggNOG" id="KOG0668">
    <property type="taxonomic scope" value="Eukaryota"/>
</dbReference>
<dbReference type="GeneTree" id="ENSGT00390000004215"/>
<dbReference type="HOGENOM" id="CLU_000288_70_4_1"/>
<dbReference type="InParanoid" id="P68400"/>
<dbReference type="OMA" id="ECHMIEW"/>
<dbReference type="OrthoDB" id="10254671at2759"/>
<dbReference type="PAN-GO" id="P68400">
    <property type="GO annotations" value="7 GO annotations based on evolutionary models"/>
</dbReference>
<dbReference type="PhylomeDB" id="P68400"/>
<dbReference type="TreeFam" id="TF300483"/>
<dbReference type="BRENDA" id="2.7.11.1">
    <property type="organism ID" value="2681"/>
</dbReference>
<dbReference type="PathwayCommons" id="P68400"/>
<dbReference type="Reactome" id="R-HSA-1483191">
    <property type="pathway name" value="Synthesis of PC"/>
</dbReference>
<dbReference type="Reactome" id="R-HSA-201688">
    <property type="pathway name" value="WNT mediated activation of DVL"/>
</dbReference>
<dbReference type="Reactome" id="R-HSA-2514853">
    <property type="pathway name" value="Condensation of Prometaphase Chromosomes"/>
</dbReference>
<dbReference type="Reactome" id="R-HSA-445144">
    <property type="pathway name" value="Signal transduction by L1"/>
</dbReference>
<dbReference type="Reactome" id="R-HSA-6804756">
    <property type="pathway name" value="Regulation of TP53 Activity through Phosphorylation"/>
</dbReference>
<dbReference type="Reactome" id="R-HSA-6814122">
    <property type="pathway name" value="Cooperation of PDCL (PhLP1) and TRiC/CCT in G-protein beta folding"/>
</dbReference>
<dbReference type="Reactome" id="R-HSA-8934903">
    <property type="pathway name" value="Receptor Mediated Mitophagy"/>
</dbReference>
<dbReference type="Reactome" id="R-HSA-8939243">
    <property type="pathway name" value="RUNX1 interacts with co-factors whose precise effect on RUNX1 targets is not known"/>
</dbReference>
<dbReference type="Reactome" id="R-HSA-8948751">
    <property type="pathway name" value="Regulation of PTEN stability and activity"/>
</dbReference>
<dbReference type="Reactome" id="R-HSA-9755511">
    <property type="pathway name" value="KEAP1-NFE2L2 pathway"/>
</dbReference>
<dbReference type="Reactome" id="R-HSA-9828806">
    <property type="pathway name" value="Maturation of hRSV A proteins"/>
</dbReference>
<dbReference type="SignaLink" id="P68400"/>
<dbReference type="SIGNOR" id="P68400"/>
<dbReference type="BioGRID-ORCS" id="1457">
    <property type="hits" value="103 hits in 1169 CRISPR screens"/>
</dbReference>
<dbReference type="CD-CODE" id="8C2F96ED">
    <property type="entry name" value="Centrosome"/>
</dbReference>
<dbReference type="CD-CODE" id="91857CE7">
    <property type="entry name" value="Nucleolus"/>
</dbReference>
<dbReference type="CD-CODE" id="9B5B2FB8">
    <property type="entry name" value="Synthetic Condensate 000374"/>
</dbReference>
<dbReference type="CD-CODE" id="DEE660B4">
    <property type="entry name" value="Stress granule"/>
</dbReference>
<dbReference type="CD-CODE" id="FB4E32DD">
    <property type="entry name" value="Presynaptic clusters and postsynaptic densities"/>
</dbReference>
<dbReference type="ChiTaRS" id="CSNK2A1">
    <property type="organism name" value="human"/>
</dbReference>
<dbReference type="EvolutionaryTrace" id="P68400"/>
<dbReference type="GeneWiki" id="Casein_kinase_2,_alpha_1"/>
<dbReference type="GenomeRNAi" id="1457"/>
<dbReference type="Pharos" id="P68400">
    <property type="development level" value="Tchem"/>
</dbReference>
<dbReference type="PRO" id="PR:P68400"/>
<dbReference type="Proteomes" id="UP000005640">
    <property type="component" value="Chromosome 20"/>
</dbReference>
<dbReference type="RNAct" id="P68400">
    <property type="molecule type" value="protein"/>
</dbReference>
<dbReference type="Bgee" id="ENSG00000101266">
    <property type="expression patterns" value="Expressed in cortical plate and 203 other cell types or tissues"/>
</dbReference>
<dbReference type="ExpressionAtlas" id="P68400">
    <property type="expression patterns" value="baseline and differential"/>
</dbReference>
<dbReference type="GO" id="GO:0005829">
    <property type="term" value="C:cytosol"/>
    <property type="evidence" value="ECO:0000318"/>
    <property type="project" value="GO_Central"/>
</dbReference>
<dbReference type="GO" id="GO:0005654">
    <property type="term" value="C:nucleoplasm"/>
    <property type="evidence" value="ECO:0000314"/>
    <property type="project" value="HPA"/>
</dbReference>
<dbReference type="GO" id="GO:0005634">
    <property type="term" value="C:nucleus"/>
    <property type="evidence" value="ECO:0000314"/>
    <property type="project" value="UniProtKB"/>
</dbReference>
<dbReference type="GO" id="GO:0005886">
    <property type="term" value="C:plasma membrane"/>
    <property type="evidence" value="ECO:0000304"/>
    <property type="project" value="ProtInc"/>
</dbReference>
<dbReference type="GO" id="GO:0016605">
    <property type="term" value="C:PML body"/>
    <property type="evidence" value="ECO:0000314"/>
    <property type="project" value="UniProt"/>
</dbReference>
<dbReference type="GO" id="GO:0005956">
    <property type="term" value="C:protein kinase CK2 complex"/>
    <property type="evidence" value="ECO:0000314"/>
    <property type="project" value="CAFA"/>
</dbReference>
<dbReference type="GO" id="GO:0070822">
    <property type="term" value="C:Sin3-type complex"/>
    <property type="evidence" value="ECO:0000314"/>
    <property type="project" value="BHF-UCL"/>
</dbReference>
<dbReference type="GO" id="GO:0005524">
    <property type="term" value="F:ATP binding"/>
    <property type="evidence" value="ECO:0007669"/>
    <property type="project" value="UniProtKB-KW"/>
</dbReference>
<dbReference type="GO" id="GO:0051879">
    <property type="term" value="F:Hsp90 protein binding"/>
    <property type="evidence" value="ECO:0000304"/>
    <property type="project" value="UniProtKB"/>
</dbReference>
<dbReference type="GO" id="GO:0042802">
    <property type="term" value="F:identical protein binding"/>
    <property type="evidence" value="ECO:0000353"/>
    <property type="project" value="IntAct"/>
</dbReference>
<dbReference type="GO" id="GO:0016301">
    <property type="term" value="F:kinase activity"/>
    <property type="evidence" value="ECO:0000314"/>
    <property type="project" value="ParkinsonsUK-UCL"/>
</dbReference>
<dbReference type="GO" id="GO:0106310">
    <property type="term" value="F:protein serine kinase activity"/>
    <property type="evidence" value="ECO:0007669"/>
    <property type="project" value="RHEA"/>
</dbReference>
<dbReference type="GO" id="GO:0004674">
    <property type="term" value="F:protein serine/threonine kinase activity"/>
    <property type="evidence" value="ECO:0000314"/>
    <property type="project" value="UniProtKB"/>
</dbReference>
<dbReference type="GO" id="GO:0006915">
    <property type="term" value="P:apoptotic process"/>
    <property type="evidence" value="ECO:0007669"/>
    <property type="project" value="UniProtKB-KW"/>
</dbReference>
<dbReference type="GO" id="GO:0061077">
    <property type="term" value="P:chaperone-mediated protein folding"/>
    <property type="evidence" value="ECO:0000304"/>
    <property type="project" value="UniProtKB"/>
</dbReference>
<dbReference type="GO" id="GO:0006974">
    <property type="term" value="P:DNA damage response"/>
    <property type="evidence" value="ECO:0000314"/>
    <property type="project" value="UniProt"/>
</dbReference>
<dbReference type="GO" id="GO:0006302">
    <property type="term" value="P:double-strand break repair"/>
    <property type="evidence" value="ECO:0000314"/>
    <property type="project" value="UniProtKB"/>
</dbReference>
<dbReference type="GO" id="GO:2001234">
    <property type="term" value="P:negative regulation of apoptotic signaling pathway"/>
    <property type="evidence" value="ECO:0000315"/>
    <property type="project" value="UniProtKB"/>
</dbReference>
<dbReference type="GO" id="GO:2000042">
    <property type="term" value="P:negative regulation of double-strand break repair via homologous recombination"/>
    <property type="evidence" value="ECO:0000314"/>
    <property type="project" value="UniProtKB"/>
</dbReference>
<dbReference type="GO" id="GO:0032435">
    <property type="term" value="P:negative regulation of proteasomal ubiquitin-dependent protein catabolic process"/>
    <property type="evidence" value="ECO:0000316"/>
    <property type="project" value="ARUK-UCL"/>
</dbReference>
<dbReference type="GO" id="GO:1901797">
    <property type="term" value="P:negative regulation of signal transduction by p53 class mediator"/>
    <property type="evidence" value="ECO:0000314"/>
    <property type="project" value="ParkinsonsUK-UCL"/>
</dbReference>
<dbReference type="GO" id="GO:0017148">
    <property type="term" value="P:negative regulation of translation"/>
    <property type="evidence" value="ECO:0000314"/>
    <property type="project" value="UniProt"/>
</dbReference>
<dbReference type="GO" id="GO:1905337">
    <property type="term" value="P:positive regulation of aggrephagy"/>
    <property type="evidence" value="ECO:0000314"/>
    <property type="project" value="UniProtKB"/>
</dbReference>
<dbReference type="GO" id="GO:0030307">
    <property type="term" value="P:positive regulation of cell growth"/>
    <property type="evidence" value="ECO:0000314"/>
    <property type="project" value="UniProtKB"/>
</dbReference>
<dbReference type="GO" id="GO:0008284">
    <property type="term" value="P:positive regulation of cell population proliferation"/>
    <property type="evidence" value="ECO:0000314"/>
    <property type="project" value="UniProtKB"/>
</dbReference>
<dbReference type="GO" id="GO:0045732">
    <property type="term" value="P:positive regulation of protein catabolic process"/>
    <property type="evidence" value="ECO:0000314"/>
    <property type="project" value="UniProtKB"/>
</dbReference>
<dbReference type="GO" id="GO:0030177">
    <property type="term" value="P:positive regulation of Wnt signaling pathway"/>
    <property type="evidence" value="ECO:0000315"/>
    <property type="project" value="UniProtKB"/>
</dbReference>
<dbReference type="GO" id="GO:0050821">
    <property type="term" value="P:protein stabilization"/>
    <property type="evidence" value="ECO:0000314"/>
    <property type="project" value="UniProt"/>
</dbReference>
<dbReference type="GO" id="GO:0051726">
    <property type="term" value="P:regulation of cell cycle"/>
    <property type="evidence" value="ECO:0000318"/>
    <property type="project" value="GO_Central"/>
</dbReference>
<dbReference type="GO" id="GO:1905818">
    <property type="term" value="P:regulation of chromosome separation"/>
    <property type="evidence" value="ECO:0000315"/>
    <property type="project" value="UniProtKB"/>
</dbReference>
<dbReference type="GO" id="GO:0048511">
    <property type="term" value="P:rhythmic process"/>
    <property type="evidence" value="ECO:0007669"/>
    <property type="project" value="UniProtKB-KW"/>
</dbReference>
<dbReference type="GO" id="GO:0007165">
    <property type="term" value="P:signal transduction"/>
    <property type="evidence" value="ECO:0000304"/>
    <property type="project" value="ProtInc"/>
</dbReference>
<dbReference type="GO" id="GO:0075342">
    <property type="term" value="P:symbiont-mediated disruption of host cell PML body"/>
    <property type="evidence" value="ECO:0000314"/>
    <property type="project" value="UniProt"/>
</dbReference>
<dbReference type="GO" id="GO:0016055">
    <property type="term" value="P:Wnt signaling pathway"/>
    <property type="evidence" value="ECO:0007669"/>
    <property type="project" value="UniProtKB-KW"/>
</dbReference>
<dbReference type="CDD" id="cd14132">
    <property type="entry name" value="STKc_CK2_alpha"/>
    <property type="match status" value="1"/>
</dbReference>
<dbReference type="FunFam" id="1.10.510.10:FF:000059">
    <property type="entry name" value="Casein kinase II subunit alpha"/>
    <property type="match status" value="1"/>
</dbReference>
<dbReference type="FunFam" id="3.30.200.20:FF:000088">
    <property type="entry name" value="Casein kinase II subunit alpha"/>
    <property type="match status" value="1"/>
</dbReference>
<dbReference type="Gene3D" id="3.30.200.20">
    <property type="entry name" value="Phosphorylase Kinase, domain 1"/>
    <property type="match status" value="1"/>
</dbReference>
<dbReference type="Gene3D" id="1.10.510.10">
    <property type="entry name" value="Transferase(Phosphotransferase) domain 1"/>
    <property type="match status" value="1"/>
</dbReference>
<dbReference type="InterPro" id="IPR045216">
    <property type="entry name" value="CK2_alpha"/>
</dbReference>
<dbReference type="InterPro" id="IPR011009">
    <property type="entry name" value="Kinase-like_dom_sf"/>
</dbReference>
<dbReference type="InterPro" id="IPR000719">
    <property type="entry name" value="Prot_kinase_dom"/>
</dbReference>
<dbReference type="InterPro" id="IPR017441">
    <property type="entry name" value="Protein_kinase_ATP_BS"/>
</dbReference>
<dbReference type="InterPro" id="IPR008271">
    <property type="entry name" value="Ser/Thr_kinase_AS"/>
</dbReference>
<dbReference type="PANTHER" id="PTHR24054">
    <property type="entry name" value="CASEIN KINASE II SUBUNIT ALPHA"/>
    <property type="match status" value="1"/>
</dbReference>
<dbReference type="PANTHER" id="PTHR24054:SF16">
    <property type="entry name" value="CASEIN KINASE II SUBUNIT ALPHA-RELATED"/>
    <property type="match status" value="1"/>
</dbReference>
<dbReference type="Pfam" id="PF00069">
    <property type="entry name" value="Pkinase"/>
    <property type="match status" value="1"/>
</dbReference>
<dbReference type="SMART" id="SM00220">
    <property type="entry name" value="S_TKc"/>
    <property type="match status" value="1"/>
</dbReference>
<dbReference type="SUPFAM" id="SSF56112">
    <property type="entry name" value="Protein kinase-like (PK-like)"/>
    <property type="match status" value="1"/>
</dbReference>
<dbReference type="PROSITE" id="PS00107">
    <property type="entry name" value="PROTEIN_KINASE_ATP"/>
    <property type="match status" value="1"/>
</dbReference>
<dbReference type="PROSITE" id="PS50011">
    <property type="entry name" value="PROTEIN_KINASE_DOM"/>
    <property type="match status" value="1"/>
</dbReference>
<dbReference type="PROSITE" id="PS00108">
    <property type="entry name" value="PROTEIN_KINASE_ST"/>
    <property type="match status" value="1"/>
</dbReference>
<accession>P68400</accession>
<accession>B4DYS6</accession>
<accession>D3DVV8</accession>
<accession>P19138</accession>
<accession>P20426</accession>
<accession>Q14013</accession>
<accession>Q5U065</accession>
<evidence type="ECO:0000250" key="1"/>
<evidence type="ECO:0000250" key="2">
    <source>
        <dbReference type="UniProtKB" id="P19139"/>
    </source>
</evidence>
<evidence type="ECO:0000255" key="3">
    <source>
        <dbReference type="PROSITE-ProRule" id="PRU00159"/>
    </source>
</evidence>
<evidence type="ECO:0000269" key="4">
    <source>
    </source>
</evidence>
<evidence type="ECO:0000269" key="5">
    <source>
    </source>
</evidence>
<evidence type="ECO:0000269" key="6">
    <source>
    </source>
</evidence>
<evidence type="ECO:0000269" key="7">
    <source>
    </source>
</evidence>
<evidence type="ECO:0000269" key="8">
    <source>
    </source>
</evidence>
<evidence type="ECO:0000269" key="9">
    <source>
    </source>
</evidence>
<evidence type="ECO:0000269" key="10">
    <source>
    </source>
</evidence>
<evidence type="ECO:0000269" key="11">
    <source>
    </source>
</evidence>
<evidence type="ECO:0000269" key="12">
    <source>
    </source>
</evidence>
<evidence type="ECO:0000269" key="13">
    <source>
    </source>
</evidence>
<evidence type="ECO:0000269" key="14">
    <source>
    </source>
</evidence>
<evidence type="ECO:0000269" key="15">
    <source>
    </source>
</evidence>
<evidence type="ECO:0000269" key="16">
    <source>
    </source>
</evidence>
<evidence type="ECO:0000269" key="17">
    <source>
    </source>
</evidence>
<evidence type="ECO:0000269" key="18">
    <source>
    </source>
</evidence>
<evidence type="ECO:0000269" key="19">
    <source>
    </source>
</evidence>
<evidence type="ECO:0000269" key="20">
    <source>
    </source>
</evidence>
<evidence type="ECO:0000269" key="21">
    <source>
    </source>
</evidence>
<evidence type="ECO:0000269" key="22">
    <source>
    </source>
</evidence>
<evidence type="ECO:0000269" key="23">
    <source>
    </source>
</evidence>
<evidence type="ECO:0000269" key="24">
    <source>
    </source>
</evidence>
<evidence type="ECO:0000269" key="25">
    <source>
    </source>
</evidence>
<evidence type="ECO:0000269" key="26">
    <source>
    </source>
</evidence>
<evidence type="ECO:0000269" key="27">
    <source>
    </source>
</evidence>
<evidence type="ECO:0000269" key="28">
    <source>
    </source>
</evidence>
<evidence type="ECO:0000269" key="29">
    <source>
    </source>
</evidence>
<evidence type="ECO:0000269" key="30">
    <source>
    </source>
</evidence>
<evidence type="ECO:0000269" key="31">
    <source>
    </source>
</evidence>
<evidence type="ECO:0000269" key="32">
    <source>
    </source>
</evidence>
<evidence type="ECO:0000269" key="33">
    <source>
    </source>
</evidence>
<evidence type="ECO:0000269" key="34">
    <source>
    </source>
</evidence>
<evidence type="ECO:0000303" key="35">
    <source>
    </source>
</evidence>
<evidence type="ECO:0000303" key="36">
    <source>
    </source>
</evidence>
<evidence type="ECO:0000303" key="37">
    <source>
    </source>
</evidence>
<evidence type="ECO:0000303" key="38">
    <source>
    </source>
</evidence>
<evidence type="ECO:0000303" key="39">
    <source>
    </source>
</evidence>
<evidence type="ECO:0000303" key="40">
    <source>
    </source>
</evidence>
<evidence type="ECO:0000305" key="41"/>
<evidence type="ECO:0007744" key="42">
    <source>
    </source>
</evidence>
<evidence type="ECO:0007829" key="43">
    <source>
        <dbReference type="PDB" id="1JWH"/>
    </source>
</evidence>
<evidence type="ECO:0007829" key="44">
    <source>
        <dbReference type="PDB" id="3WAR"/>
    </source>
</evidence>
<evidence type="ECO:0007829" key="45">
    <source>
        <dbReference type="PDB" id="5CVG"/>
    </source>
</evidence>
<evidence type="ECO:0007829" key="46">
    <source>
        <dbReference type="PDB" id="5ZN2"/>
    </source>
</evidence>
<evidence type="ECO:0007829" key="47">
    <source>
        <dbReference type="PDB" id="6YZH"/>
    </source>
</evidence>
<evidence type="ECO:0007829" key="48">
    <source>
        <dbReference type="PDB" id="7ZYK"/>
    </source>
</evidence>
<name>CSK21_HUMAN</name>
<comment type="function">
    <text evidence="2 5 7 10 11 12 13 14 16 17 18 19 20 21 22 23 24 25 27 28 29 30 31 32 33 35 37 38 39 40">Catalytic subunit of a constitutively active serine/threonine-protein kinase complex that phosphorylates a large number of substrates containing acidic residues C-terminal to the phosphorylated serine or threonine (PubMed:11239457, PubMed:11704824, PubMed:16193064, PubMed:18411307, PubMed:18583988, PubMed:18678890, PubMed:19188443, PubMed:20545769, PubMed:20625391, PubMed:22017874, PubMed:22406621, PubMed:24962073, PubMed:30898438, PubMed:31439799). Regulates numerous cellular processes, such as cell cycle progression, apoptosis and transcription, as well as viral infection (PubMed:12631575, PubMed:19387551, PubMed:19387552). May act as a regulatory node which integrates and coordinates numerous signals leading to an appropriate cellular response (PubMed:12631575, PubMed:19387551, PubMed:19387552). During mitosis, functions as a component of the p53/TP53-dependent spindle assembly checkpoint (SAC) that maintains cyclin-B-CDK1 activity and G2 arrest in response to spindle damage (PubMed:11704824, PubMed:19188443). Also required for p53/TP53-mediated apoptosis, phosphorylating 'Ser-392' of p53/TP53 following UV irradiation (PubMed:11239457). Phosphorylates a number of DNA repair proteins in response to DNA damage, such as MDC1, MRE11, RAD9A, RAD51 and HTATSF1, promoting their recruitment to DNA damage sites (PubMed:18411307, PubMed:18583988, PubMed:18678890, PubMed:20545769, PubMed:21482717, PubMed:22325354, PubMed:26811421, PubMed:28512243, PubMed:30898438, PubMed:35597237). Can also negatively regulate apoptosis (PubMed:16193064, PubMed:22184066). Phosphorylates the caspases CASP9 and CASP2 and the apoptotic regulator NOL3 (PubMed:16193064). Phosphorylation protects CASP9 from cleavage and activation by CASP8, and inhibits the dimerization of CASP2 and activation of CASP8 (PubMed:16193064). Phosphorylates YY1, protecting YY1 from cleavage by CASP7 during apoptosis (PubMed:22184066). Regulates transcription by direct phosphorylation of RNA polymerases I, II, III and IV (PubMed:12631575, PubMed:19387550, PubMed:19387551, PubMed:19387552, PubMed:23123191). Also phosphorylates and regulates numerous transcription factors including NF-kappa-B, STAT1, CREB1, IRF1, IRF2, ATF1, ATF4, SRF, MAX, JUN, FOS, MYC and MYB (PubMed:12631575, PubMed:19387550, PubMed:19387551, PubMed:19387552, PubMed:23123191). Phosphorylates Hsp90 and its co-chaperones FKBP4 and CDC37, which is essential for chaperone function (PubMed:19387550). Mediates sequential phosphorylation of FNIP1, promoting its gradual interaction with Hsp90, leading to activate both kinase and non-kinase client proteins of Hsp90 (PubMed:30699359). Regulates Wnt signaling by phosphorylating CTNNB1 and the transcription factor LEF1 (PubMed:19387549). Acts as an ectokinase that phosphorylates several extracellular proteins (PubMed:12631575, PubMed:19387550, PubMed:19387551, PubMed:19387552). During viral infection, phosphorylates various proteins involved in the viral life cycles of EBV, HSV, HBV, HCV, HIV, CMV and HPV (PubMed:12631575, PubMed:19387550, PubMed:19387551, PubMed:19387552). Phosphorylates PML at 'Ser-565' and primes it for ubiquitin-mediated degradation (PubMed:20625391, PubMed:22406621). Plays an important role in the circadian clock function by phosphorylating BMAL1 at 'Ser-90' which is pivotal for its interaction with CLOCK and which controls CLOCK nuclear entry (By similarity). Phosphorylates CCAR2 at 'Thr-454' in gastric carcinoma tissue (PubMed:24962073). Phosphorylates FMR1, promoting FMR1-dependent formation of a membraneless compartment (PubMed:30765518, PubMed:31439799). May phosphorylate histone H2A on 'Ser-1' (PubMed:38334665).</text>
</comment>
<comment type="catalytic activity">
    <reaction evidence="11 12 13 16 17 18 19 20 23 27 28 30 31">
        <text>L-seryl-[protein] + ATP = O-phospho-L-seryl-[protein] + ADP + H(+)</text>
        <dbReference type="Rhea" id="RHEA:17989"/>
        <dbReference type="Rhea" id="RHEA-COMP:9863"/>
        <dbReference type="Rhea" id="RHEA-COMP:11604"/>
        <dbReference type="ChEBI" id="CHEBI:15378"/>
        <dbReference type="ChEBI" id="CHEBI:29999"/>
        <dbReference type="ChEBI" id="CHEBI:30616"/>
        <dbReference type="ChEBI" id="CHEBI:83421"/>
        <dbReference type="ChEBI" id="CHEBI:456216"/>
        <dbReference type="EC" id="2.7.11.1"/>
    </reaction>
    <physiologicalReaction direction="left-to-right" evidence="11 12 13 16 18 23 27 28 30 31 32">
        <dbReference type="Rhea" id="RHEA:17990"/>
    </physiologicalReaction>
</comment>
<comment type="catalytic activity">
    <reaction evidence="11 12 13 17 21 31">
        <text>L-threonyl-[protein] + ATP = O-phospho-L-threonyl-[protein] + ADP + H(+)</text>
        <dbReference type="Rhea" id="RHEA:46608"/>
        <dbReference type="Rhea" id="RHEA-COMP:11060"/>
        <dbReference type="Rhea" id="RHEA-COMP:11605"/>
        <dbReference type="ChEBI" id="CHEBI:15378"/>
        <dbReference type="ChEBI" id="CHEBI:30013"/>
        <dbReference type="ChEBI" id="CHEBI:30616"/>
        <dbReference type="ChEBI" id="CHEBI:61977"/>
        <dbReference type="ChEBI" id="CHEBI:456216"/>
        <dbReference type="EC" id="2.7.11.1"/>
    </reaction>
    <physiologicalReaction direction="left-to-right" evidence="11 12 13 31">
        <dbReference type="Rhea" id="RHEA:46609"/>
    </physiologicalReaction>
</comment>
<comment type="activity regulation">
    <text>Constitutively active protein kinase whose activity is not directly affected by phosphorylation. Seems to be regulated by level of expression and localization.</text>
</comment>
<comment type="subunit">
    <text evidence="4 5 6 8 9 15 17 22 24">Heterotetramer composed of two catalytic subunits (alpha chain and/or alpha' chain) and two regulatory subunits (beta chains). The tetramer can exist as a combination of 2 alpha/2 beta, 2 alpha'/2 beta or 1 alpha/1 alpha'/2 beta subunits. Also part of a CK2-SPT16-SSRP1 complex composed of SSRP1, SUPT16H, CSNK2A1, CSNK2A2 and CSNK2B, which forms following UV irradiation. Interacts with RNPS1. Interacts with SNAI1. Interacts with PML (isoform PML-12). Interacts with CCAR2. Interacts with HIRIP3 (PubMed:38334665).</text>
</comment>
<comment type="interaction">
    <interactant intactId="EBI-347804">
        <id>P68400</id>
    </interactant>
    <interactant intactId="EBI-2967304">
        <id>P78563</id>
        <label>ADARB1</label>
    </interactant>
    <organismsDiffer>false</organismsDiffer>
    <experiments>3</experiments>
</comment>
<comment type="interaction">
    <interactant intactId="EBI-347804">
        <id>P68400</id>
    </interactant>
    <interactant intactId="EBI-704197">
        <id>O00170</id>
        <label>AIP</label>
    </interactant>
    <organismsDiffer>false</organismsDiffer>
    <experiments>2</experiments>
</comment>
<comment type="interaction">
    <interactant intactId="EBI-347804">
        <id>P68400</id>
    </interactant>
    <interactant intactId="EBI-77613">
        <id>P05067</id>
        <label>APP</label>
    </interactant>
    <organismsDiffer>false</organismsDiffer>
    <experiments>3</experiments>
</comment>
<comment type="interaction">
    <interactant intactId="EBI-347804">
        <id>P68400</id>
    </interactant>
    <interactant intactId="EBI-11954292">
        <id>Q86V38</id>
        <label>ATN1</label>
    </interactant>
    <organismsDiffer>false</organismsDiffer>
    <experiments>6</experiments>
</comment>
<comment type="interaction">
    <interactant intactId="EBI-347804">
        <id>P68400</id>
    </interactant>
    <interactant intactId="EBI-10181188">
        <id>Q8N7W2-2</id>
        <label>BEND7</label>
    </interactant>
    <organismsDiffer>false</organismsDiffer>
    <experiments>3</experiments>
</comment>
<comment type="interaction">
    <interactant intactId="EBI-347804">
        <id>P68400</id>
    </interactant>
    <interactant intactId="EBI-2341576">
        <id>P35226</id>
        <label>BMI1</label>
    </interactant>
    <organismsDiffer>false</organismsDiffer>
    <experiments>2</experiments>
</comment>
<comment type="interaction">
    <interactant intactId="EBI-347804">
        <id>P68400</id>
    </interactant>
    <interactant intactId="EBI-4392727">
        <id>O00257-3</id>
        <label>CBX4</label>
    </interactant>
    <organismsDiffer>false</organismsDiffer>
    <experiments>2</experiments>
</comment>
<comment type="interaction">
    <interactant intactId="EBI-347804">
        <id>P68400</id>
    </interactant>
    <interactant intactId="EBI-744311">
        <id>Q8IYX3</id>
        <label>CCDC116</label>
    </interactant>
    <organismsDiffer>false</organismsDiffer>
    <experiments>3</experiments>
</comment>
<comment type="interaction">
    <interactant intactId="EBI-347804">
        <id>P68400</id>
    </interactant>
    <interactant intactId="EBI-347804">
        <id>P68400</id>
        <label>CSNK2A1</label>
    </interactant>
    <organismsDiffer>false</organismsDiffer>
    <experiments>5</experiments>
</comment>
<comment type="interaction">
    <interactant intactId="EBI-347804">
        <id>P68400</id>
    </interactant>
    <interactant intactId="EBI-347451">
        <id>P19784</id>
        <label>CSNK2A2</label>
    </interactant>
    <organismsDiffer>false</organismsDiffer>
    <experiments>15</experiments>
</comment>
<comment type="interaction">
    <interactant intactId="EBI-347804">
        <id>P68400</id>
    </interactant>
    <interactant intactId="EBI-348169">
        <id>P67870</id>
        <label>CSNK2B</label>
    </interactant>
    <organismsDiffer>false</organismsDiffer>
    <experiments>33</experiments>
</comment>
<comment type="interaction">
    <interactant intactId="EBI-347804">
        <id>P68400</id>
    </interactant>
    <interactant intactId="EBI-12051833">
        <id>Q5HYN5</id>
        <label>CT45A1</label>
    </interactant>
    <organismsDiffer>false</organismsDiffer>
    <experiments>3</experiments>
</comment>
<comment type="interaction">
    <interactant intactId="EBI-347804">
        <id>P68400</id>
    </interactant>
    <interactant intactId="EBI-713081">
        <id>Q9GZR7</id>
        <label>DDX24</label>
    </interactant>
    <organismsDiffer>false</organismsDiffer>
    <experiments>3</experiments>
</comment>
<comment type="interaction">
    <interactant intactId="EBI-347804">
        <id>P68400</id>
    </interactant>
    <interactant intactId="EBI-301977">
        <id>P35659</id>
        <label>DEK</label>
    </interactant>
    <organismsDiffer>false</organismsDiffer>
    <experiments>3</experiments>
</comment>
<comment type="interaction">
    <interactant intactId="EBI-347804">
        <id>P68400</id>
    </interactant>
    <interactant intactId="EBI-739789">
        <id>Q92997</id>
        <label>DVL3</label>
    </interactant>
    <organismsDiffer>false</organismsDiffer>
    <experiments>5</experiments>
</comment>
<comment type="interaction">
    <interactant intactId="EBI-347804">
        <id>P68400</id>
    </interactant>
    <interactant intactId="EBI-711977">
        <id>P20042</id>
        <label>EIF2S2</label>
    </interactant>
    <organismsDiffer>false</organismsDiffer>
    <experiments>2</experiments>
</comment>
<comment type="interaction">
    <interactant intactId="EBI-347804">
        <id>P68400</id>
    </interactant>
    <interactant intactId="EBI-366647">
        <id>O75822</id>
        <label>EIF3J</label>
    </interactant>
    <organismsDiffer>false</organismsDiffer>
    <experiments>5</experiments>
</comment>
<comment type="interaction">
    <interactant intactId="EBI-347804">
        <id>P68400</id>
    </interactant>
    <interactant intactId="EBI-10268158">
        <id>Q8N9E0</id>
        <label>FAM133A</label>
    </interactant>
    <organismsDiffer>false</organismsDiffer>
    <experiments>7</experiments>
</comment>
<comment type="interaction">
    <interactant intactId="EBI-347804">
        <id>P68400</id>
    </interactant>
    <interactant intactId="EBI-11977403">
        <id>A0A0C3SFZ9</id>
        <label>FCHO1</label>
    </interactant>
    <organismsDiffer>false</organismsDiffer>
    <experiments>3</experiments>
</comment>
<comment type="interaction">
    <interactant intactId="EBI-347804">
        <id>P68400</id>
    </interactant>
    <interactant intactId="EBI-12068108">
        <id>Q9NW75-2</id>
        <label>GPATCH2</label>
    </interactant>
    <organismsDiffer>false</organismsDiffer>
    <experiments>3</experiments>
</comment>
<comment type="interaction">
    <interactant intactId="EBI-347804">
        <id>P68400</id>
    </interactant>
    <interactant intactId="EBI-11959863">
        <id>Q9NWQ4-1</id>
        <label>GPATCH2L</label>
    </interactant>
    <organismsDiffer>false</organismsDiffer>
    <experiments>6</experiments>
</comment>
<comment type="interaction">
    <interactant intactId="EBI-347804">
        <id>P68400</id>
    </interactant>
    <interactant intactId="EBI-19954058">
        <id>O15499</id>
        <label>GSC2</label>
    </interactant>
    <organismsDiffer>false</organismsDiffer>
    <experiments>3</experiments>
</comment>
<comment type="interaction">
    <interactant intactId="EBI-347804">
        <id>P68400</id>
    </interactant>
    <interactant intactId="EBI-301834">
        <id>Q13547</id>
        <label>HDAC1</label>
    </interactant>
    <organismsDiffer>false</organismsDiffer>
    <experiments>4</experiments>
</comment>
<comment type="interaction">
    <interactant intactId="EBI-347804">
        <id>P68400</id>
    </interactant>
    <interactant intactId="EBI-301821">
        <id>Q92769</id>
        <label>HDAC2</label>
    </interactant>
    <organismsDiffer>false</organismsDiffer>
    <experiments>3</experiments>
</comment>
<comment type="interaction">
    <interactant intactId="EBI-347804">
        <id>P68400</id>
    </interactant>
    <interactant intactId="EBI-3923226">
        <id>P09017</id>
        <label>HOXC4</label>
    </interactant>
    <organismsDiffer>false</organismsDiffer>
    <experiments>3</experiments>
</comment>
<comment type="interaction">
    <interactant intactId="EBI-347804">
        <id>P68400</id>
    </interactant>
    <interactant intactId="EBI-352572">
        <id>P08238</id>
        <label>HSP90AB1</label>
    </interactant>
    <organismsDiffer>false</organismsDiffer>
    <experiments>2</experiments>
</comment>
<comment type="interaction">
    <interactant intactId="EBI-347804">
        <id>P68400</id>
    </interactant>
    <interactant intactId="EBI-12094820">
        <id>A0A0C4DFT8</id>
        <label>JADE2</label>
    </interactant>
    <organismsDiffer>false</organismsDiffer>
    <experiments>3</experiments>
</comment>
<comment type="interaction">
    <interactant intactId="EBI-347804">
        <id>P68400</id>
    </interactant>
    <interactant intactId="EBI-751001">
        <id>Q14145</id>
        <label>KEAP1</label>
    </interactant>
    <organismsDiffer>false</organismsDiffer>
    <experiments>3</experiments>
</comment>
<comment type="interaction">
    <interactant intactId="EBI-347804">
        <id>P68400</id>
    </interactant>
    <interactant intactId="EBI-10213781">
        <id>Q5T7B8-2</id>
        <label>KIF24</label>
    </interactant>
    <organismsDiffer>false</organismsDiffer>
    <experiments>3</experiments>
</comment>
<comment type="interaction">
    <interactant intactId="EBI-347804">
        <id>P68400</id>
    </interactant>
    <interactant intactId="EBI-717170">
        <id>O60282</id>
        <label>KIF5C</label>
    </interactant>
    <organismsDiffer>false</organismsDiffer>
    <experiments>4</experiments>
</comment>
<comment type="interaction">
    <interactant intactId="EBI-347804">
        <id>P68400</id>
    </interactant>
    <interactant intactId="EBI-2432309">
        <id>Q92876</id>
        <label>KLK6</label>
    </interactant>
    <organismsDiffer>false</organismsDiffer>
    <experiments>3</experiments>
</comment>
<comment type="interaction">
    <interactant intactId="EBI-347804">
        <id>P68400</id>
    </interactant>
    <interactant intactId="EBI-12039345">
        <id>Q9UBR4-2</id>
        <label>LHX3</label>
    </interactant>
    <organismsDiffer>false</organismsDiffer>
    <experiments>3</experiments>
</comment>
<comment type="interaction">
    <interactant intactId="EBI-347804">
        <id>P68400</id>
    </interactant>
    <interactant intactId="EBI-8474075">
        <id>Q68G74</id>
        <label>LHX8</label>
    </interactant>
    <organismsDiffer>false</organismsDiffer>
    <experiments>3</experiments>
</comment>
<comment type="interaction">
    <interactant intactId="EBI-347804">
        <id>P68400</id>
    </interactant>
    <interactant intactId="EBI-10175218">
        <id>Q9NQ69</id>
        <label>LHX9</label>
    </interactant>
    <organismsDiffer>false</organismsDiffer>
    <experiments>3</experiments>
</comment>
<comment type="interaction">
    <interactant intactId="EBI-347804">
        <id>P68400</id>
    </interactant>
    <interactant intactId="EBI-2558389">
        <id>Q96GA3</id>
        <label>LTV1</label>
    </interactant>
    <organismsDiffer>false</organismsDiffer>
    <experiments>2</experiments>
</comment>
<comment type="interaction">
    <interactant intactId="EBI-347804">
        <id>P68400</id>
    </interactant>
    <interactant intactId="EBI-720354">
        <id>Q9H063</id>
        <label>MAF1</label>
    </interactant>
    <organismsDiffer>false</organismsDiffer>
    <experiments>2</experiments>
</comment>
<comment type="interaction">
    <interactant intactId="EBI-347804">
        <id>P68400</id>
    </interactant>
    <interactant intactId="EBI-10178634">
        <id>P43364-2</id>
        <label>MAGEA11</label>
    </interactant>
    <organismsDiffer>false</organismsDiffer>
    <experiments>3</experiments>
</comment>
<comment type="interaction">
    <interactant intactId="EBI-347804">
        <id>P68400</id>
    </interactant>
    <interactant intactId="EBI-2864512">
        <id>P50221</id>
        <label>MEOX1</label>
    </interactant>
    <organismsDiffer>false</organismsDiffer>
    <experiments>3</experiments>
</comment>
<comment type="interaction">
    <interactant intactId="EBI-347804">
        <id>P68400</id>
    </interactant>
    <interactant intactId="EBI-16439278">
        <id>Q6FHY5</id>
        <label>MEOX2</label>
    </interactant>
    <organismsDiffer>false</organismsDiffer>
    <experiments>3</experiments>
</comment>
<comment type="interaction">
    <interactant intactId="EBI-347804">
        <id>P68400</id>
    </interactant>
    <interactant intactId="EBI-742459">
        <id>Q9BU76</id>
        <label>MMTAG2</label>
    </interactant>
    <organismsDiffer>false</organismsDiffer>
    <experiments>4</experiments>
</comment>
<comment type="interaction">
    <interactant intactId="EBI-347804">
        <id>P68400</id>
    </interactant>
    <interactant intactId="EBI-346967">
        <id>P19338</id>
        <label>NCL</label>
    </interactant>
    <organismsDiffer>false</organismsDiffer>
    <experiments>2</experiments>
</comment>
<comment type="interaction">
    <interactant intactId="EBI-347804">
        <id>P68400</id>
    </interactant>
    <interactant intactId="EBI-389739">
        <id>P23511</id>
        <label>NFYA</label>
    </interactant>
    <organismsDiffer>false</organismsDiffer>
    <experiments>4</experiments>
</comment>
<comment type="interaction">
    <interactant intactId="EBI-347804">
        <id>P68400</id>
    </interactant>
    <interactant intactId="EBI-11061759">
        <id>P23511-2</id>
        <label>NFYA</label>
    </interactant>
    <organismsDiffer>false</organismsDiffer>
    <experiments>3</experiments>
</comment>
<comment type="interaction">
    <interactant intactId="EBI-347804">
        <id>P68400</id>
    </interactant>
    <interactant intactId="EBI-296331">
        <id>Q02548</id>
        <label>PAX5</label>
    </interactant>
    <organismsDiffer>false</organismsDiffer>
    <experiments>3</experiments>
</comment>
<comment type="interaction">
    <interactant intactId="EBI-347804">
        <id>P68400</id>
    </interactant>
    <interactant intactId="EBI-747278">
        <id>P26367</id>
        <label>PAX6</label>
    </interactant>
    <organismsDiffer>false</organismsDiffer>
    <experiments>5</experiments>
</comment>
<comment type="interaction">
    <interactant intactId="EBI-347804">
        <id>P68400</id>
    </interactant>
    <interactant intactId="EBI-2339674">
        <id>Q5T6S3</id>
        <label>PHF19</label>
    </interactant>
    <organismsDiffer>false</organismsDiffer>
    <experiments>3</experiments>
</comment>
<comment type="interaction">
    <interactant intactId="EBI-347804">
        <id>P68400</id>
    </interactant>
    <interactant intactId="EBI-11532361">
        <id>P78356-2</id>
        <label>PIP4K2B</label>
    </interactant>
    <organismsDiffer>false</organismsDiffer>
    <experiments>3</experiments>
</comment>
<comment type="interaction">
    <interactant intactId="EBI-347804">
        <id>P68400</id>
    </interactant>
    <interactant intactId="EBI-295890">
        <id>P29590</id>
        <label>PML</label>
    </interactant>
    <organismsDiffer>false</organismsDiffer>
    <experiments>2</experiments>
</comment>
<comment type="interaction">
    <interactant intactId="EBI-347804">
        <id>P68400</id>
    </interactant>
    <interactant intactId="EBI-681904">
        <id>Q9H307</id>
        <label>PNN</label>
    </interactant>
    <organismsDiffer>false</organismsDiffer>
    <experiments>2</experiments>
</comment>
<comment type="interaction">
    <interactant intactId="EBI-347804">
        <id>P68400</id>
    </interactant>
    <interactant intactId="EBI-12029004">
        <id>P78424</id>
        <label>POU6F2</label>
    </interactant>
    <organismsDiffer>false</organismsDiffer>
    <experiments>3</experiments>
</comment>
<comment type="interaction">
    <interactant intactId="EBI-347804">
        <id>P68400</id>
    </interactant>
    <interactant intactId="EBI-5280197">
        <id>O75400-2</id>
        <label>PRPF40A</label>
    </interactant>
    <organismsDiffer>false</organismsDiffer>
    <experiments>2</experiments>
</comment>
<comment type="interaction">
    <interactant intactId="EBI-347804">
        <id>P68400</id>
    </interactant>
    <interactant intactId="EBI-395290">
        <id>Q14498</id>
        <label>RBM39</label>
    </interactant>
    <organismsDiffer>false</organismsDiffer>
    <experiments>3</experiments>
</comment>
<comment type="interaction">
    <interactant intactId="EBI-347804">
        <id>P68400</id>
    </interactant>
    <interactant intactId="EBI-10829018">
        <id>Q04864-2</id>
        <label>REL</label>
    </interactant>
    <organismsDiffer>false</organismsDiffer>
    <experiments>3</experiments>
</comment>
<comment type="interaction">
    <interactant intactId="EBI-347804">
        <id>P68400</id>
    </interactant>
    <interactant intactId="EBI-2129175">
        <id>Q6ZNA4</id>
        <label>RNF111</label>
    </interactant>
    <organismsDiffer>false</organismsDiffer>
    <experiments>7</experiments>
</comment>
<comment type="interaction">
    <interactant intactId="EBI-347804">
        <id>P68400</id>
    </interactant>
    <interactant intactId="EBI-722416">
        <id>Q99496</id>
        <label>RNF2</label>
    </interactant>
    <organismsDiffer>false</organismsDiffer>
    <experiments>6</experiments>
</comment>
<comment type="interaction">
    <interactant intactId="EBI-347804">
        <id>P68400</id>
    </interactant>
    <interactant intactId="EBI-354582">
        <id>P05386</id>
        <label>RPLP1</label>
    </interactant>
    <organismsDiffer>false</organismsDiffer>
    <experiments>2</experiments>
</comment>
<comment type="interaction">
    <interactant intactId="EBI-347804">
        <id>P68400</id>
    </interactant>
    <interactant intactId="EBI-352451">
        <id>P62269</id>
        <label>RPS18</label>
    </interactant>
    <organismsDiffer>false</organismsDiffer>
    <experiments>2</experiments>
</comment>
<comment type="interaction">
    <interactant intactId="EBI-347804">
        <id>P68400</id>
    </interactant>
    <interactant intactId="EBI-351193">
        <id>P23396</id>
        <label>RPS3</label>
    </interactant>
    <organismsDiffer>false</organismsDiffer>
    <experiments>2</experiments>
</comment>
<comment type="interaction">
    <interactant intactId="EBI-347804">
        <id>P68400</id>
    </interactant>
    <interactant intactId="EBI-1053182">
        <id>Q01105</id>
        <label>SET</label>
    </interactant>
    <organismsDiffer>false</organismsDiffer>
    <experiments>2</experiments>
</comment>
<comment type="interaction">
    <interactant intactId="EBI-347804">
        <id>P68400</id>
    </interactant>
    <interactant intactId="EBI-749111">
        <id>Q13435</id>
        <label>SF3B2</label>
    </interactant>
    <organismsDiffer>false</organismsDiffer>
    <experiments>2</experiments>
</comment>
<comment type="interaction">
    <interactant intactId="EBI-347804">
        <id>P68400</id>
    </interactant>
    <interactant intactId="EBI-1802965">
        <id>Q96EB6</id>
        <label>SIRT1</label>
    </interactant>
    <organismsDiffer>false</organismsDiffer>
    <experiments>5</experiments>
</comment>
<comment type="interaction">
    <interactant intactId="EBI-347804">
        <id>P68400</id>
    </interactant>
    <interactant intactId="EBI-1051105">
        <id>Q92504</id>
        <label>SLC39A7</label>
    </interactant>
    <organismsDiffer>false</organismsDiffer>
    <experiments>4</experiments>
</comment>
<comment type="interaction">
    <interactant intactId="EBI-347804">
        <id>P68400</id>
    </interactant>
    <interactant intactId="EBI-9876238">
        <id>O43623</id>
        <label>SNAI2</label>
    </interactant>
    <organismsDiffer>false</organismsDiffer>
    <experiments>3</experiments>
</comment>
<comment type="interaction">
    <interactant intactId="EBI-347804">
        <id>P68400</id>
    </interactant>
    <interactant intactId="EBI-621482">
        <id>P12931</id>
        <label>SRC</label>
    </interactant>
    <organismsDiffer>false</organismsDiffer>
    <experiments>2</experiments>
</comment>
<comment type="interaction">
    <interactant intactId="EBI-347804">
        <id>P68400</id>
    </interactant>
    <interactant intactId="EBI-353771">
        <id>Q08945</id>
        <label>SSRP1</label>
    </interactant>
    <organismsDiffer>false</organismsDiffer>
    <experiments>4</experiments>
</comment>
<comment type="interaction">
    <interactant intactId="EBI-347804">
        <id>P68400</id>
    </interactant>
    <interactant intactId="EBI-745680">
        <id>Q96MF2</id>
        <label>STAC3</label>
    </interactant>
    <organismsDiffer>false</organismsDiffer>
    <experiments>7</experiments>
</comment>
<comment type="interaction">
    <interactant intactId="EBI-347804">
        <id>P68400</id>
    </interactant>
    <interactant intactId="EBI-540496">
        <id>Q9H7L9</id>
        <label>SUDS3</label>
    </interactant>
    <organismsDiffer>false</organismsDiffer>
    <experiments>2</experiments>
</comment>
<comment type="interaction">
    <interactant intactId="EBI-347804">
        <id>P68400</id>
    </interactant>
    <interactant intactId="EBI-2691252">
        <id>O75683</id>
        <label>SURF6</label>
    </interactant>
    <organismsDiffer>false</organismsDiffer>
    <experiments>2</experiments>
</comment>
<comment type="interaction">
    <interactant intactId="EBI-347804">
        <id>P68400</id>
    </interactant>
    <interactant intactId="EBI-11139477">
        <id>Q96N21</id>
        <label>TEPSIN</label>
    </interactant>
    <organismsDiffer>false</organismsDiffer>
    <experiments>3</experiments>
</comment>
<comment type="interaction">
    <interactant intactId="EBI-347804">
        <id>P68400</id>
    </interactant>
    <interactant intactId="EBI-741515">
        <id>Q9NVV9</id>
        <label>THAP1</label>
    </interactant>
    <organismsDiffer>false</organismsDiffer>
    <experiments>7</experiments>
</comment>
<comment type="interaction">
    <interactant intactId="EBI-347804">
        <id>P68400</id>
    </interactant>
    <interactant intactId="EBI-352039">
        <id>Q9Y2W1</id>
        <label>THRAP3</label>
    </interactant>
    <organismsDiffer>false</organismsDiffer>
    <experiments>2</experiments>
</comment>
<comment type="interaction">
    <interactant intactId="EBI-347804">
        <id>P68400</id>
    </interactant>
    <interactant intactId="EBI-11741437">
        <id>Q08117-2</id>
        <label>TLE5</label>
    </interactant>
    <organismsDiffer>false</organismsDiffer>
    <experiments>3</experiments>
</comment>
<comment type="interaction">
    <interactant intactId="EBI-347804">
        <id>P68400</id>
    </interactant>
    <interactant intactId="EBI-725997">
        <id>Q8WV44</id>
        <label>TRIM41</label>
    </interactant>
    <organismsDiffer>false</organismsDiffer>
    <experiments>3</experiments>
</comment>
<comment type="interaction">
    <interactant intactId="EBI-347804">
        <id>P68400</id>
    </interactant>
    <interactant intactId="EBI-947459">
        <id>Q9H2G4</id>
        <label>TSPYL2</label>
    </interactant>
    <organismsDiffer>false</organismsDiffer>
    <experiments>5</experiments>
</comment>
<comment type="interaction">
    <interactant intactId="EBI-347804">
        <id>P68400</id>
    </interactant>
    <interactant intactId="EBI-12272076">
        <id>Q13360-2</id>
        <label>ZNF177</label>
    </interactant>
    <organismsDiffer>false</organismsDiffer>
    <experiments>3</experiments>
</comment>
<comment type="interaction">
    <interactant intactId="EBI-347804">
        <id>P68400</id>
    </interactant>
    <interactant intactId="EBI-726439">
        <id>Q8IYI8</id>
        <label>ZNF440</label>
    </interactant>
    <organismsDiffer>false</organismsDiffer>
    <experiments>3</experiments>
</comment>
<comment type="interaction">
    <interactant intactId="EBI-347804">
        <id>P68400</id>
    </interactant>
    <interactant intactId="EBI-373363">
        <id>Q96NG5</id>
        <label>ZNF558</label>
    </interactant>
    <organismsDiffer>false</organismsDiffer>
    <experiments>3</experiments>
</comment>
<comment type="interaction">
    <interactant intactId="EBI-347804">
        <id>P68400</id>
    </interactant>
    <interactant intactId="EBI-745276">
        <id>Q9BS34</id>
        <label>ZNF670</label>
    </interactant>
    <organismsDiffer>false</organismsDiffer>
    <experiments>3</experiments>
</comment>
<comment type="interaction">
    <interactant intactId="EBI-347804">
        <id>P68400</id>
    </interactant>
    <interactant intactId="EBI-14650477">
        <id>Q6NSZ9-2</id>
        <label>ZSCAN25</label>
    </interactant>
    <organismsDiffer>false</organismsDiffer>
    <experiments>3</experiments>
</comment>
<comment type="subcellular location">
    <subcellularLocation>
        <location evidence="23 24">Nucleus</location>
    </subcellularLocation>
</comment>
<comment type="alternative products">
    <event type="alternative splicing"/>
    <isoform>
        <id>P68400-1</id>
        <name>1</name>
        <sequence type="displayed"/>
    </isoform>
    <isoform>
        <id>P68400-2</id>
        <name>2</name>
        <sequence type="described" ref="VSP_041925"/>
    </isoform>
</comment>
<comment type="tissue specificity">
    <text evidence="24">Expressed in gastric carcinoma tissue and the expression gradually increases with the progression of the carcinoma (at protein level).</text>
</comment>
<comment type="PTM">
    <text evidence="34">Phosphorylated at Thr-344, Thr-360, Ser-362 and Ser-370 by CDK1 in prophase and metaphase and dephosphorylated during anaphase. Phosphorylation does not directly affect casein kinase 2 activity, but may contribute to its regulation by forming binding sites for interacting proteins and/or targeting it to different compartments.</text>
</comment>
<comment type="disease" evidence="26">
    <disease id="DI-04799">
        <name>Okur-Chung neurodevelopmental syndrome</name>
        <acronym>OCNDS</acronym>
        <description>An autosomal dominant neurodevelopmental disorder characterized by developmental delay, intellectual disability, behavioral problems, hypotonia, speech problems, microcephaly, pachygyria and variable dysmorphic features.</description>
        <dbReference type="MIM" id="617062"/>
    </disease>
    <text>The disease is caused by variants affecting the gene represented in this entry.</text>
</comment>
<comment type="miscellaneous">
    <text>Can use both ATP and GTP as phosphoryl donors. Phosphorylation by casein kinase 2 has been estimated to represent up to one quarter of the eukaryotic phosphoproteome. Casein kinase 2 has been found to be increased at protein level and up-regulated at the level of enzyme activity in the majority of cancers. However, elevated levels of casein kinase 2 are present in certain normal organs such as brain and testes.</text>
</comment>
<comment type="similarity">
    <text evidence="3">Belongs to the protein kinase superfamily. Ser/Thr protein kinase family. CK2 subfamily.</text>
</comment>
<feature type="chain" id="PRO_0000085883" description="Casein kinase II subunit alpha">
    <location>
        <begin position="1"/>
        <end position="391"/>
    </location>
</feature>
<feature type="domain" description="Protein kinase" evidence="3">
    <location>
        <begin position="39"/>
        <end position="324"/>
    </location>
</feature>
<feature type="region of interest" description="Interaction with beta subunit" evidence="1">
    <location>
        <begin position="36"/>
        <end position="41"/>
    </location>
</feature>
<feature type="active site" description="Proton acceptor">
    <location>
        <position position="156"/>
    </location>
</feature>
<feature type="binding site" evidence="3">
    <location>
        <begin position="45"/>
        <end position="53"/>
    </location>
    <ligand>
        <name>ATP</name>
        <dbReference type="ChEBI" id="CHEBI:30616"/>
    </ligand>
</feature>
<feature type="binding site" evidence="3">
    <location>
        <position position="68"/>
    </location>
    <ligand>
        <name>ATP</name>
        <dbReference type="ChEBI" id="CHEBI:30616"/>
    </ligand>
</feature>
<feature type="modified residue" description="Phosphothreonine; by CDK1" evidence="34">
    <location>
        <position position="344"/>
    </location>
</feature>
<feature type="modified residue" description="Phosphothreonine; by CDK1" evidence="34">
    <location>
        <position position="360"/>
    </location>
</feature>
<feature type="modified residue" description="Phosphoserine; by CDK1" evidence="34">
    <location>
        <position position="362"/>
    </location>
</feature>
<feature type="modified residue" description="Phosphoserine; by CDK1" evidence="34 42">
    <location>
        <position position="370"/>
    </location>
</feature>
<feature type="splice variant" id="VSP_041925" description="In isoform 2." evidence="36">
    <location>
        <begin position="1"/>
        <end position="136"/>
    </location>
</feature>
<feature type="sequence variant" id="VAR_077045" description="In OCNDS; dbSNP:rs869312845." evidence="26">
    <original>R</original>
    <variation>Q</variation>
    <location>
        <position position="47"/>
    </location>
</feature>
<feature type="sequence variant" id="VAR_077046" description="In OCNDS; dbSNP:rs869312849." evidence="26">
    <original>Y</original>
    <variation>S</variation>
    <location>
        <position position="50"/>
    </location>
</feature>
<feature type="sequence variant" id="VAR_077047" description="In OCNDS; dbSNP:rs869312848." evidence="26">
    <original>D</original>
    <variation>G</variation>
    <location>
        <position position="175"/>
    </location>
</feature>
<feature type="sequence variant" id="VAR_077048" description="In OCNDS; dbSNP:rs869312840." evidence="26">
    <original>K</original>
    <variation>R</variation>
    <location>
        <position position="198"/>
    </location>
</feature>
<feature type="sequence conflict" description="In Ref. 3; CAA49758." evidence="41" ref="3">
    <original>L</original>
    <variation>F</variation>
    <location>
        <position position="128"/>
    </location>
</feature>
<feature type="sequence conflict" description="In Ref. 3; CAA49758." evidence="41" ref="3">
    <original>D</original>
    <variation>G</variation>
    <location>
        <position position="256"/>
    </location>
</feature>
<feature type="sequence conflict" description="In Ref. 3; CAA49758." evidence="41" ref="3">
    <original>S</original>
    <variation>R</variation>
    <location>
        <position position="287"/>
    </location>
</feature>
<feature type="sequence conflict" description="In Ref. 3; CAA49758." evidence="41" ref="3">
    <original>M</original>
    <variation>V</variation>
    <location>
        <position position="351"/>
    </location>
</feature>
<feature type="strand" evidence="44">
    <location>
        <begin position="10"/>
        <end position="12"/>
    </location>
</feature>
<feature type="turn" evidence="44">
    <location>
        <begin position="13"/>
        <end position="18"/>
    </location>
</feature>
<feature type="helix" evidence="44">
    <location>
        <begin position="21"/>
        <end position="24"/>
    </location>
</feature>
<feature type="helix" evidence="44">
    <location>
        <begin position="26"/>
        <end position="28"/>
    </location>
</feature>
<feature type="strand" evidence="47">
    <location>
        <begin position="29"/>
        <end position="32"/>
    </location>
</feature>
<feature type="helix" evidence="44">
    <location>
        <begin position="36"/>
        <end position="38"/>
    </location>
</feature>
<feature type="strand" evidence="44">
    <location>
        <begin position="39"/>
        <end position="47"/>
    </location>
</feature>
<feature type="strand" evidence="44">
    <location>
        <begin position="49"/>
        <end position="58"/>
    </location>
</feature>
<feature type="turn" evidence="44">
    <location>
        <begin position="59"/>
        <end position="61"/>
    </location>
</feature>
<feature type="strand" evidence="44">
    <location>
        <begin position="64"/>
        <end position="70"/>
    </location>
</feature>
<feature type="helix" evidence="48">
    <location>
        <begin position="72"/>
        <end position="74"/>
    </location>
</feature>
<feature type="helix" evidence="44">
    <location>
        <begin position="75"/>
        <end position="88"/>
    </location>
</feature>
<feature type="strand" evidence="44">
    <location>
        <begin position="97"/>
        <end position="102"/>
    </location>
</feature>
<feature type="turn" evidence="44">
    <location>
        <begin position="104"/>
        <end position="106"/>
    </location>
</feature>
<feature type="strand" evidence="44">
    <location>
        <begin position="107"/>
        <end position="114"/>
    </location>
</feature>
<feature type="turn" evidence="45">
    <location>
        <begin position="118"/>
        <end position="120"/>
    </location>
</feature>
<feature type="helix" evidence="44">
    <location>
        <begin position="121"/>
        <end position="124"/>
    </location>
</feature>
<feature type="helix" evidence="44">
    <location>
        <begin position="125"/>
        <end position="127"/>
    </location>
</feature>
<feature type="helix" evidence="44">
    <location>
        <begin position="130"/>
        <end position="149"/>
    </location>
</feature>
<feature type="helix" evidence="44">
    <location>
        <begin position="159"/>
        <end position="161"/>
    </location>
</feature>
<feature type="strand" evidence="44">
    <location>
        <begin position="162"/>
        <end position="165"/>
    </location>
</feature>
<feature type="helix" evidence="44">
    <location>
        <begin position="166"/>
        <end position="168"/>
    </location>
</feature>
<feature type="strand" evidence="44">
    <location>
        <begin position="170"/>
        <end position="173"/>
    </location>
</feature>
<feature type="helix" evidence="46">
    <location>
        <begin position="176"/>
        <end position="178"/>
    </location>
</feature>
<feature type="helix" evidence="44">
    <location>
        <begin position="195"/>
        <end position="197"/>
    </location>
</feature>
<feature type="helix" evidence="44">
    <location>
        <begin position="200"/>
        <end position="203"/>
    </location>
</feature>
<feature type="helix" evidence="44">
    <location>
        <begin position="212"/>
        <end position="227"/>
    </location>
</feature>
<feature type="strand" evidence="44">
    <location>
        <begin position="230"/>
        <end position="233"/>
    </location>
</feature>
<feature type="helix" evidence="44">
    <location>
        <begin position="238"/>
        <end position="249"/>
    </location>
</feature>
<feature type="helix" evidence="44">
    <location>
        <begin position="251"/>
        <end position="261"/>
    </location>
</feature>
<feature type="helix" evidence="44">
    <location>
        <begin position="267"/>
        <end position="269"/>
    </location>
</feature>
<feature type="turn" evidence="44">
    <location>
        <begin position="270"/>
        <end position="272"/>
    </location>
</feature>
<feature type="helix" evidence="44">
    <location>
        <begin position="281"/>
        <end position="284"/>
    </location>
</feature>
<feature type="turn" evidence="44">
    <location>
        <begin position="287"/>
        <end position="289"/>
    </location>
</feature>
<feature type="helix" evidence="44">
    <location>
        <begin position="290"/>
        <end position="292"/>
    </location>
</feature>
<feature type="helix" evidence="44">
    <location>
        <begin position="295"/>
        <end position="304"/>
    </location>
</feature>
<feature type="helix" evidence="44">
    <location>
        <begin position="309"/>
        <end position="311"/>
    </location>
</feature>
<feature type="helix" evidence="44">
    <location>
        <begin position="315"/>
        <end position="318"/>
    </location>
</feature>
<feature type="helix" evidence="44">
    <location>
        <begin position="322"/>
        <end position="324"/>
    </location>
</feature>
<feature type="helix" evidence="44">
    <location>
        <begin position="325"/>
        <end position="331"/>
    </location>
</feature>
<feature type="strand" evidence="43">
    <location>
        <begin position="333"/>
        <end position="335"/>
    </location>
</feature>
<keyword id="KW-0002">3D-structure</keyword>
<keyword id="KW-0025">Alternative splicing</keyword>
<keyword id="KW-0053">Apoptosis</keyword>
<keyword id="KW-0067">ATP-binding</keyword>
<keyword id="KW-0090">Biological rhythms</keyword>
<keyword id="KW-0131">Cell cycle</keyword>
<keyword id="KW-0225">Disease variant</keyword>
<keyword id="KW-0991">Intellectual disability</keyword>
<keyword id="KW-0418">Kinase</keyword>
<keyword id="KW-0547">Nucleotide-binding</keyword>
<keyword id="KW-0539">Nucleus</keyword>
<keyword id="KW-0597">Phosphoprotein</keyword>
<keyword id="KW-1267">Proteomics identification</keyword>
<keyword id="KW-1185">Reference proteome</keyword>
<keyword id="KW-0723">Serine/threonine-protein kinase</keyword>
<keyword id="KW-0804">Transcription</keyword>
<keyword id="KW-0805">Transcription regulation</keyword>
<keyword id="KW-0808">Transferase</keyword>
<keyword id="KW-0879">Wnt signaling pathway</keyword>
<reference key="1">
    <citation type="journal article" date="1989" name="Biochemistry">
        <title>Molecular cloning of the human casein kinase II alpha subunit.</title>
        <authorList>
            <person name="Meisner H."/>
            <person name="Heller-Harrison R."/>
            <person name="Buxton J."/>
            <person name="Czech M.P."/>
        </authorList>
    </citation>
    <scope>NUCLEOTIDE SEQUENCE [MRNA] (ISOFORM 1)</scope>
</reference>
<reference key="2">
    <citation type="journal article" date="1990" name="Biochemistry">
        <title>Isolation and characterization of human cDNA clones encoding the alpha and the alpha' subunits of casein kinase II.</title>
        <authorList>
            <person name="Lozeman F.J."/>
            <person name="Litchfield D.W."/>
            <person name="Piening C."/>
            <person name="Takio K."/>
            <person name="Walsh K.A."/>
            <person name="Krebs E.G."/>
        </authorList>
    </citation>
    <scope>NUCLEOTIDE SEQUENCE [MRNA] (ISOFORM 1)</scope>
</reference>
<reference key="3">
    <citation type="journal article" date="1993" name="FEBS Lett.">
        <title>Structure and sequence of an intronless gene for human casein kinase II-alpha subunit.</title>
        <authorList>
            <person name="Devilat I."/>
            <person name="Carvallo P."/>
        </authorList>
    </citation>
    <scope>NUCLEOTIDE SEQUENCE [GENOMIC DNA / MRNA] (ISOFORM 1)</scope>
</reference>
<reference key="4">
    <citation type="journal article" date="2004" name="Nat. Genet.">
        <title>Complete sequencing and characterization of 21,243 full-length human cDNAs.</title>
        <authorList>
            <person name="Ota T."/>
            <person name="Suzuki Y."/>
            <person name="Nishikawa T."/>
            <person name="Otsuki T."/>
            <person name="Sugiyama T."/>
            <person name="Irie R."/>
            <person name="Wakamatsu A."/>
            <person name="Hayashi K."/>
            <person name="Sato H."/>
            <person name="Nagai K."/>
            <person name="Kimura K."/>
            <person name="Makita H."/>
            <person name="Sekine M."/>
            <person name="Obayashi M."/>
            <person name="Nishi T."/>
            <person name="Shibahara T."/>
            <person name="Tanaka T."/>
            <person name="Ishii S."/>
            <person name="Yamamoto J."/>
            <person name="Saito K."/>
            <person name="Kawai Y."/>
            <person name="Isono Y."/>
            <person name="Nakamura Y."/>
            <person name="Nagahari K."/>
            <person name="Murakami K."/>
            <person name="Yasuda T."/>
            <person name="Iwayanagi T."/>
            <person name="Wagatsuma M."/>
            <person name="Shiratori A."/>
            <person name="Sudo H."/>
            <person name="Hosoiri T."/>
            <person name="Kaku Y."/>
            <person name="Kodaira H."/>
            <person name="Kondo H."/>
            <person name="Sugawara M."/>
            <person name="Takahashi M."/>
            <person name="Kanda K."/>
            <person name="Yokoi T."/>
            <person name="Furuya T."/>
            <person name="Kikkawa E."/>
            <person name="Omura Y."/>
            <person name="Abe K."/>
            <person name="Kamihara K."/>
            <person name="Katsuta N."/>
            <person name="Sato K."/>
            <person name="Tanikawa M."/>
            <person name="Yamazaki M."/>
            <person name="Ninomiya K."/>
            <person name="Ishibashi T."/>
            <person name="Yamashita H."/>
            <person name="Murakawa K."/>
            <person name="Fujimori K."/>
            <person name="Tanai H."/>
            <person name="Kimata M."/>
            <person name="Watanabe M."/>
            <person name="Hiraoka S."/>
            <person name="Chiba Y."/>
            <person name="Ishida S."/>
            <person name="Ono Y."/>
            <person name="Takiguchi S."/>
            <person name="Watanabe S."/>
            <person name="Yosida M."/>
            <person name="Hotuta T."/>
            <person name="Kusano J."/>
            <person name="Kanehori K."/>
            <person name="Takahashi-Fujii A."/>
            <person name="Hara H."/>
            <person name="Tanase T.-O."/>
            <person name="Nomura Y."/>
            <person name="Togiya S."/>
            <person name="Komai F."/>
            <person name="Hara R."/>
            <person name="Takeuchi K."/>
            <person name="Arita M."/>
            <person name="Imose N."/>
            <person name="Musashino K."/>
            <person name="Yuuki H."/>
            <person name="Oshima A."/>
            <person name="Sasaki N."/>
            <person name="Aotsuka S."/>
            <person name="Yoshikawa Y."/>
            <person name="Matsunawa H."/>
            <person name="Ichihara T."/>
            <person name="Shiohata N."/>
            <person name="Sano S."/>
            <person name="Moriya S."/>
            <person name="Momiyama H."/>
            <person name="Satoh N."/>
            <person name="Takami S."/>
            <person name="Terashima Y."/>
            <person name="Suzuki O."/>
            <person name="Nakagawa S."/>
            <person name="Senoh A."/>
            <person name="Mizoguchi H."/>
            <person name="Goto Y."/>
            <person name="Shimizu F."/>
            <person name="Wakebe H."/>
            <person name="Hishigaki H."/>
            <person name="Watanabe T."/>
            <person name="Sugiyama A."/>
            <person name="Takemoto M."/>
            <person name="Kawakami B."/>
            <person name="Yamazaki M."/>
            <person name="Watanabe K."/>
            <person name="Kumagai A."/>
            <person name="Itakura S."/>
            <person name="Fukuzumi Y."/>
            <person name="Fujimori Y."/>
            <person name="Komiyama M."/>
            <person name="Tashiro H."/>
            <person name="Tanigami A."/>
            <person name="Fujiwara T."/>
            <person name="Ono T."/>
            <person name="Yamada K."/>
            <person name="Fujii Y."/>
            <person name="Ozaki K."/>
            <person name="Hirao M."/>
            <person name="Ohmori Y."/>
            <person name="Kawabata A."/>
            <person name="Hikiji T."/>
            <person name="Kobatake N."/>
            <person name="Inagaki H."/>
            <person name="Ikema Y."/>
            <person name="Okamoto S."/>
            <person name="Okitani R."/>
            <person name="Kawakami T."/>
            <person name="Noguchi S."/>
            <person name="Itoh T."/>
            <person name="Shigeta K."/>
            <person name="Senba T."/>
            <person name="Matsumura K."/>
            <person name="Nakajima Y."/>
            <person name="Mizuno T."/>
            <person name="Morinaga M."/>
            <person name="Sasaki M."/>
            <person name="Togashi T."/>
            <person name="Oyama M."/>
            <person name="Hata H."/>
            <person name="Watanabe M."/>
            <person name="Komatsu T."/>
            <person name="Mizushima-Sugano J."/>
            <person name="Satoh T."/>
            <person name="Shirai Y."/>
            <person name="Takahashi Y."/>
            <person name="Nakagawa K."/>
            <person name="Okumura K."/>
            <person name="Nagase T."/>
            <person name="Nomura N."/>
            <person name="Kikuchi H."/>
            <person name="Masuho Y."/>
            <person name="Yamashita R."/>
            <person name="Nakai K."/>
            <person name="Yada T."/>
            <person name="Nakamura Y."/>
            <person name="Ohara O."/>
            <person name="Isogai T."/>
            <person name="Sugano S."/>
        </authorList>
    </citation>
    <scope>NUCLEOTIDE SEQUENCE [LARGE SCALE MRNA] (ISOFORM 2)</scope>
</reference>
<reference key="5">
    <citation type="submission" date="2004-10" db="EMBL/GenBank/DDBJ databases">
        <title>Cloning of human full-length CDSs in BD Creator(TM) system donor vector.</title>
        <authorList>
            <person name="Kalnine N."/>
            <person name="Chen X."/>
            <person name="Rolfs A."/>
            <person name="Halleck A."/>
            <person name="Hines L."/>
            <person name="Eisenstein S."/>
            <person name="Koundinya M."/>
            <person name="Raphael J."/>
            <person name="Moreira D."/>
            <person name="Kelley T."/>
            <person name="LaBaer J."/>
            <person name="Lin Y."/>
            <person name="Phelan M."/>
            <person name="Farmer A."/>
        </authorList>
    </citation>
    <scope>NUCLEOTIDE SEQUENCE [LARGE SCALE MRNA] (ISOFORM 1)</scope>
</reference>
<reference key="6">
    <citation type="journal article" date="2008" name="Nat. Methods">
        <title>Human protein factory for converting the transcriptome into an in vitro-expressed proteome.</title>
        <authorList>
            <person name="Goshima N."/>
            <person name="Kawamura Y."/>
            <person name="Fukumoto A."/>
            <person name="Miura A."/>
            <person name="Honma R."/>
            <person name="Satoh R."/>
            <person name="Wakamatsu A."/>
            <person name="Yamamoto J."/>
            <person name="Kimura K."/>
            <person name="Nishikawa T."/>
            <person name="Andoh T."/>
            <person name="Iida Y."/>
            <person name="Ishikawa K."/>
            <person name="Ito E."/>
            <person name="Kagawa N."/>
            <person name="Kaminaga C."/>
            <person name="Kanehori K."/>
            <person name="Kawakami B."/>
            <person name="Kenmochi K."/>
            <person name="Kimura R."/>
            <person name="Kobayashi M."/>
            <person name="Kuroita T."/>
            <person name="Kuwayama H."/>
            <person name="Maruyama Y."/>
            <person name="Matsuo K."/>
            <person name="Minami K."/>
            <person name="Mitsubori M."/>
            <person name="Mori M."/>
            <person name="Morishita R."/>
            <person name="Murase A."/>
            <person name="Nishikawa A."/>
            <person name="Nishikawa S."/>
            <person name="Okamoto T."/>
            <person name="Sakagami N."/>
            <person name="Sakamoto Y."/>
            <person name="Sasaki Y."/>
            <person name="Seki T."/>
            <person name="Sono S."/>
            <person name="Sugiyama A."/>
            <person name="Sumiya T."/>
            <person name="Takayama T."/>
            <person name="Takayama Y."/>
            <person name="Takeda H."/>
            <person name="Togashi T."/>
            <person name="Yahata K."/>
            <person name="Yamada H."/>
            <person name="Yanagisawa Y."/>
            <person name="Endo Y."/>
            <person name="Imamoto F."/>
            <person name="Kisu Y."/>
            <person name="Tanaka S."/>
            <person name="Isogai T."/>
            <person name="Imai J."/>
            <person name="Watanabe S."/>
            <person name="Nomura N."/>
        </authorList>
    </citation>
    <scope>NUCLEOTIDE SEQUENCE [LARGE SCALE MRNA] (ISOFORM 1)</scope>
</reference>
<reference key="7">
    <citation type="journal article" date="2001" name="Nature">
        <title>The DNA sequence and comparative analysis of human chromosome 20.</title>
        <authorList>
            <person name="Deloukas P."/>
            <person name="Matthews L.H."/>
            <person name="Ashurst J.L."/>
            <person name="Burton J."/>
            <person name="Gilbert J.G.R."/>
            <person name="Jones M."/>
            <person name="Stavrides G."/>
            <person name="Almeida J.P."/>
            <person name="Babbage A.K."/>
            <person name="Bagguley C.L."/>
            <person name="Bailey J."/>
            <person name="Barlow K.F."/>
            <person name="Bates K.N."/>
            <person name="Beard L.M."/>
            <person name="Beare D.M."/>
            <person name="Beasley O.P."/>
            <person name="Bird C.P."/>
            <person name="Blakey S.E."/>
            <person name="Bridgeman A.M."/>
            <person name="Brown A.J."/>
            <person name="Buck D."/>
            <person name="Burrill W.D."/>
            <person name="Butler A.P."/>
            <person name="Carder C."/>
            <person name="Carter N.P."/>
            <person name="Chapman J.C."/>
            <person name="Clamp M."/>
            <person name="Clark G."/>
            <person name="Clark L.N."/>
            <person name="Clark S.Y."/>
            <person name="Clee C.M."/>
            <person name="Clegg S."/>
            <person name="Cobley V.E."/>
            <person name="Collier R.E."/>
            <person name="Connor R.E."/>
            <person name="Corby N.R."/>
            <person name="Coulson A."/>
            <person name="Coville G.J."/>
            <person name="Deadman R."/>
            <person name="Dhami P.D."/>
            <person name="Dunn M."/>
            <person name="Ellington A.G."/>
            <person name="Frankland J.A."/>
            <person name="Fraser A."/>
            <person name="French L."/>
            <person name="Garner P."/>
            <person name="Grafham D.V."/>
            <person name="Griffiths C."/>
            <person name="Griffiths M.N.D."/>
            <person name="Gwilliam R."/>
            <person name="Hall R.E."/>
            <person name="Hammond S."/>
            <person name="Harley J.L."/>
            <person name="Heath P.D."/>
            <person name="Ho S."/>
            <person name="Holden J.L."/>
            <person name="Howden P.J."/>
            <person name="Huckle E."/>
            <person name="Hunt A.R."/>
            <person name="Hunt S.E."/>
            <person name="Jekosch K."/>
            <person name="Johnson C.M."/>
            <person name="Johnson D."/>
            <person name="Kay M.P."/>
            <person name="Kimberley A.M."/>
            <person name="King A."/>
            <person name="Knights A."/>
            <person name="Laird G.K."/>
            <person name="Lawlor S."/>
            <person name="Lehvaeslaiho M.H."/>
            <person name="Leversha M.A."/>
            <person name="Lloyd C."/>
            <person name="Lloyd D.M."/>
            <person name="Lovell J.D."/>
            <person name="Marsh V.L."/>
            <person name="Martin S.L."/>
            <person name="McConnachie L.J."/>
            <person name="McLay K."/>
            <person name="McMurray A.A."/>
            <person name="Milne S.A."/>
            <person name="Mistry D."/>
            <person name="Moore M.J.F."/>
            <person name="Mullikin J.C."/>
            <person name="Nickerson T."/>
            <person name="Oliver K."/>
            <person name="Parker A."/>
            <person name="Patel R."/>
            <person name="Pearce T.A.V."/>
            <person name="Peck A.I."/>
            <person name="Phillimore B.J.C.T."/>
            <person name="Prathalingam S.R."/>
            <person name="Plumb R.W."/>
            <person name="Ramsay H."/>
            <person name="Rice C.M."/>
            <person name="Ross M.T."/>
            <person name="Scott C.E."/>
            <person name="Sehra H.K."/>
            <person name="Shownkeen R."/>
            <person name="Sims S."/>
            <person name="Skuce C.D."/>
            <person name="Smith M.L."/>
            <person name="Soderlund C."/>
            <person name="Steward C.A."/>
            <person name="Sulston J.E."/>
            <person name="Swann R.M."/>
            <person name="Sycamore N."/>
            <person name="Taylor R."/>
            <person name="Tee L."/>
            <person name="Thomas D.W."/>
            <person name="Thorpe A."/>
            <person name="Tracey A."/>
            <person name="Tromans A.C."/>
            <person name="Vaudin M."/>
            <person name="Wall M."/>
            <person name="Wallis J.M."/>
            <person name="Whitehead S.L."/>
            <person name="Whittaker P."/>
            <person name="Willey D.L."/>
            <person name="Williams L."/>
            <person name="Williams S.A."/>
            <person name="Wilming L."/>
            <person name="Wray P.W."/>
            <person name="Hubbard T."/>
            <person name="Durbin R.M."/>
            <person name="Bentley D.R."/>
            <person name="Beck S."/>
            <person name="Rogers J."/>
        </authorList>
    </citation>
    <scope>NUCLEOTIDE SEQUENCE [LARGE SCALE GENOMIC DNA]</scope>
</reference>
<reference key="8">
    <citation type="submission" date="2005-09" db="EMBL/GenBank/DDBJ databases">
        <authorList>
            <person name="Mural R.J."/>
            <person name="Istrail S."/>
            <person name="Sutton G.G."/>
            <person name="Florea L."/>
            <person name="Halpern A.L."/>
            <person name="Mobarry C.M."/>
            <person name="Lippert R."/>
            <person name="Walenz B."/>
            <person name="Shatkay H."/>
            <person name="Dew I."/>
            <person name="Miller J.R."/>
            <person name="Flanigan M.J."/>
            <person name="Edwards N.J."/>
            <person name="Bolanos R."/>
            <person name="Fasulo D."/>
            <person name="Halldorsson B.V."/>
            <person name="Hannenhalli S."/>
            <person name="Turner R."/>
            <person name="Yooseph S."/>
            <person name="Lu F."/>
            <person name="Nusskern D.R."/>
            <person name="Shue B.C."/>
            <person name="Zheng X.H."/>
            <person name="Zhong F."/>
            <person name="Delcher A.L."/>
            <person name="Huson D.H."/>
            <person name="Kravitz S.A."/>
            <person name="Mouchard L."/>
            <person name="Reinert K."/>
            <person name="Remington K.A."/>
            <person name="Clark A.G."/>
            <person name="Waterman M.S."/>
            <person name="Eichler E.E."/>
            <person name="Adams M.D."/>
            <person name="Hunkapiller M.W."/>
            <person name="Myers E.W."/>
            <person name="Venter J.C."/>
        </authorList>
    </citation>
    <scope>NUCLEOTIDE SEQUENCE [LARGE SCALE GENOMIC DNA]</scope>
</reference>
<reference key="9">
    <citation type="journal article" date="2004" name="Genome Res.">
        <title>The status, quality, and expansion of the NIH full-length cDNA project: the Mammalian Gene Collection (MGC).</title>
        <authorList>
            <consortium name="The MGC Project Team"/>
        </authorList>
    </citation>
    <scope>NUCLEOTIDE SEQUENCE [LARGE SCALE MRNA] (ISOFORM 1)</scope>
    <source>
        <tissue>Lung</tissue>
        <tissue>Muscle</tissue>
        <tissue>Uterus</tissue>
    </source>
</reference>
<reference key="10">
    <citation type="journal article" date="1995" name="J. Biol. Chem.">
        <title>Phosphorylation of casein kinase II by p34cdc2. Identification of phosphorylation sites using phosphorylation site mutants in vitro.</title>
        <authorList>
            <person name="Bosc D.G."/>
            <person name="Slominski E."/>
            <person name="Sichler C."/>
            <person name="Litchfield D.W."/>
        </authorList>
    </citation>
    <scope>PHOSPHORYLATION AT THR-344; THR-360; SER-362 AND SER-370</scope>
</reference>
<reference key="11">
    <citation type="journal article" date="2001" name="Mol. Cell">
        <title>A DNA damage-induced p53 serine 392 kinase complex contains CK2, hSpt16, and SSRP1.</title>
        <authorList>
            <person name="Keller D.M."/>
            <person name="Zeng X."/>
            <person name="Wang Y."/>
            <person name="Zhang Q.H."/>
            <person name="Kapoor M."/>
            <person name="Shu H."/>
            <person name="Goodman R."/>
            <person name="Lozano G."/>
            <person name="Zhao Y."/>
            <person name="Lu H."/>
        </authorList>
    </citation>
    <scope>FUNCTION</scope>
    <scope>INTERACTION WITH SSRP1 AND SUPT16H</scope>
</reference>
<reference key="12">
    <citation type="journal article" date="2001" name="Oncogene">
        <title>Protein kinase CK2 is involved in G2 arrest and apoptosis following spindle damage in epithelial cells.</title>
        <authorList>
            <person name="Sayed M."/>
            <person name="Pelech S."/>
            <person name="Wong C."/>
            <person name="Marotta A."/>
            <person name="Salh B."/>
        </authorList>
    </citation>
    <scope>FUNCTION IN CELL CYCLE</scope>
</reference>
<reference key="13">
    <citation type="journal article" date="2002" name="J. Biol. Chem.">
        <title>p53 serine 392 phosphorylation increases after UV through induction of the assembly of the CK2.hSPT16.SSRP1 complex.</title>
        <authorList>
            <person name="Keller D.M."/>
            <person name="Lu H."/>
        </authorList>
    </citation>
    <scope>INTERACTION WITH SSRP1 AND SUPT16H</scope>
</reference>
<reference key="14">
    <citation type="journal article" date="2005" name="EMBO J.">
        <title>Caspase-2 primes cancer cells for TRAIL-mediated apoptosis by processing procaspase-8.</title>
        <authorList>
            <person name="Shin S."/>
            <person name="Lee Y."/>
            <person name="Kim W."/>
            <person name="Ko H."/>
            <person name="Choi H."/>
            <person name="Kim K."/>
        </authorList>
    </citation>
    <scope>FUNCTION IN APOPTOSIS</scope>
</reference>
<reference key="15">
    <citation type="journal article" date="2005" name="Mol. Cell. Biol.">
        <title>Activation of pre-mRNA splicing by human RNPS1 is regulated by CK2 phosphorylation.</title>
        <authorList>
            <person name="Trembley J.H."/>
            <person name="Tatsumi S."/>
            <person name="Sakashita E."/>
            <person name="Loyer P."/>
            <person name="Slaughter C.A."/>
            <person name="Suzuki H."/>
            <person name="Endo H."/>
            <person name="Kidd V.J."/>
            <person name="Mayeda A."/>
        </authorList>
    </citation>
    <scope>INTERACTION WITH RNPS1</scope>
</reference>
<reference key="16">
    <citation type="journal article" date="2008" name="EMBO Rep.">
        <title>Phospho-dependent interactions between NBS1 and MDC1 mediate chromatin retention of the MRN complex at sites of DNA damage.</title>
        <authorList>
            <person name="Chapman J.R."/>
            <person name="Jackson S.P."/>
        </authorList>
    </citation>
    <scope>FUNCTION</scope>
    <scope>CATALYTIC ACTIVITY</scope>
</reference>
<reference key="17">
    <citation type="journal article" date="2008" name="J. Cell Biol.">
        <title>Phosphorylation of SDT repeats in the MDC1 N terminus triggers retention of NBS1 at the DNA damage-modified chromatin.</title>
        <authorList>
            <person name="Melander F."/>
            <person name="Bekker-Jensen S."/>
            <person name="Falck J."/>
            <person name="Bartek J."/>
            <person name="Mailand N."/>
            <person name="Lukas J."/>
        </authorList>
    </citation>
    <scope>FUNCTION</scope>
    <scope>CATALYTIC ACTIVITY</scope>
</reference>
<reference key="18">
    <citation type="journal article" date="2008" name="Mol. Cell">
        <title>Kinase-selective enrichment enables quantitative phosphoproteomics of the kinome across the cell cycle.</title>
        <authorList>
            <person name="Daub H."/>
            <person name="Olsen J.V."/>
            <person name="Bairlein M."/>
            <person name="Gnad F."/>
            <person name="Oppermann F.S."/>
            <person name="Korner R."/>
            <person name="Greff Z."/>
            <person name="Keri G."/>
            <person name="Stemmann O."/>
            <person name="Mann M."/>
        </authorList>
    </citation>
    <scope>PHOSPHORYLATION [LARGE SCALE ANALYSIS] AT SER-370</scope>
    <scope>IDENTIFICATION BY MASS SPECTROMETRY [LARGE SCALE ANALYSIS]</scope>
    <source>
        <tissue>Cervix carcinoma</tissue>
    </source>
</reference>
<reference key="19">
    <citation type="journal article" date="2008" name="Proc. Natl. Acad. Sci. U.S.A.">
        <title>MDC1 regulates intra-S-phase checkpoint by targeting NBS1 to DNA double-strand breaks.</title>
        <authorList>
            <person name="Wu L."/>
            <person name="Luo K."/>
            <person name="Lou Z."/>
            <person name="Chen J."/>
        </authorList>
    </citation>
    <scope>FUNCTION</scope>
    <scope>CATALYTIC ACTIVITY</scope>
</reference>
<reference key="20">
    <citation type="journal article" date="2009" name="Mol. Cell. Biol.">
        <title>Evidence for regulation of mitotic progression through temporal phosphorylation and dephosphorylation of CK2alpha.</title>
        <authorList>
            <person name="St-Denis N.A."/>
            <person name="Derksen D.R."/>
            <person name="Litchfield D.W."/>
        </authorList>
    </citation>
    <scope>FUNCTION IN CELL CYCLE</scope>
</reference>
<reference key="21">
    <citation type="journal article" date="2003" name="FASEB J.">
        <title>One-thousand-and-one substrates of protein kinase CK2?</title>
        <authorList>
            <person name="Meggio F."/>
            <person name="Pinna L.A."/>
        </authorList>
    </citation>
    <scope>REVIEW ON FUNCTION</scope>
</reference>
<reference key="22">
    <citation type="journal article" date="2009" name="Cell. Mol. Life Sci.">
        <title>Protein kinase CK2 in health and disease: Protein kinase CK2: from structures to insights.</title>
        <authorList>
            <person name="Niefind K."/>
            <person name="Raaf J."/>
            <person name="Issinger O.G."/>
        </authorList>
    </citation>
    <scope>REVIEW ON STRUCTURE</scope>
</reference>
<reference key="23">
    <citation type="journal article" date="2009" name="Cell. Mol. Life Sci.">
        <title>Protein kinase CK2 in health and disease: From birth to death: the role of protein kinase CK2 in the regulation of cell proliferation and survival.</title>
        <authorList>
            <person name="St-Denis N.A."/>
            <person name="Litchfield D.W."/>
        </authorList>
    </citation>
    <scope>REVIEW ON FUNCTION</scope>
</reference>
<reference key="24">
    <citation type="journal article" date="2009" name="Cell. Mol. Life Sci.">
        <title>Protein kinase CK2 in health and disease: Cellular functions of protein kinase CK2: a dynamic affair.</title>
        <authorList>
            <person name="Filhol O."/>
            <person name="Cochet C."/>
        </authorList>
    </citation>
    <scope>REVIEW ON FUNCTION</scope>
</reference>
<reference key="25">
    <citation type="journal article" date="2009" name="Cell. Mol. Life Sci.">
        <title>Protein kinase CK2 in health and disease: CK2: the kinase controlling the Hsp90 chaperone machinery.</title>
        <authorList>
            <person name="Miyata Y."/>
        </authorList>
    </citation>
    <scope>REVIEW ON FUNCTION IN REGULATION OF HSP90</scope>
</reference>
<reference key="26">
    <citation type="journal article" date="2009" name="Cell. Mol. Life Sci.">
        <title>Protein kinase CK2 in health and disease: CK2 and its role in Wnt and NF-kappaB signaling: linking development and cancer.</title>
        <authorList>
            <person name="Dominguez I."/>
            <person name="Sonenshein G.E."/>
            <person name="Seldin D.C."/>
        </authorList>
    </citation>
    <scope>REVIEW ON FUNCTION IN WNT SIGNALING</scope>
</reference>
<reference key="27">
    <citation type="journal article" date="2010" name="Genes Cells">
        <title>Casein kinase 2-dependent phosphorylation of human Rad9 mediates the interaction between human Rad9-Hus1-Rad1 complex and TopBP1.</title>
        <authorList>
            <person name="Takeishi Y."/>
            <person name="Ohashi E."/>
            <person name="Ogawa K."/>
            <person name="Masai H."/>
            <person name="Obuse C."/>
            <person name="Tsurimoto T."/>
        </authorList>
    </citation>
    <scope>FUNCTION</scope>
    <scope>CATALYTIC ACTIVITY</scope>
</reference>
<reference key="28">
    <citation type="journal article" date="2010" name="Mol. Biol. Cell">
        <title>Phosphorylation of serine 11 and serine 92 as new positive regulators of human Snail1 function: potential involvement of casein kinase-2 and the cAMP-activated kinase protein kinase A.</title>
        <authorList>
            <person name="MacPherson M.R."/>
            <person name="Molina P."/>
            <person name="Souchelnytskyi S."/>
            <person name="Wernstedt C."/>
            <person name="Martin-Perez J."/>
            <person name="Portillo F."/>
            <person name="Cano A."/>
        </authorList>
    </citation>
    <scope>INTERACTION WITH SNAI1</scope>
</reference>
<reference key="29">
    <citation type="journal article" date="2010" name="PLoS ONE">
        <title>Functional polymorphism of the CK2alpha intronless gene plays oncogenic roles in lung cancer.</title>
        <authorList>
            <person name="Hung M.S."/>
            <person name="Lin Y.C."/>
            <person name="Mao J.H."/>
            <person name="Kim I.J."/>
            <person name="Xu Z."/>
            <person name="Yang C.T."/>
            <person name="Jablons D.M."/>
            <person name="You L."/>
        </authorList>
    </citation>
    <scope>FUNCTION</scope>
    <scope>CATALYTIC ACTIVITY</scope>
    <scope>INTERACTION WITH PML</scope>
</reference>
<reference key="30">
    <citation type="journal article" date="2010" name="Sci. Signal.">
        <title>Quantitative phosphoproteomics reveals widespread full phosphorylation site occupancy during mitosis.</title>
        <authorList>
            <person name="Olsen J.V."/>
            <person name="Vermeulen M."/>
            <person name="Santamaria A."/>
            <person name="Kumar C."/>
            <person name="Miller M.L."/>
            <person name="Jensen L.J."/>
            <person name="Gnad F."/>
            <person name="Cox J."/>
            <person name="Jensen T.S."/>
            <person name="Nigg E.A."/>
            <person name="Brunak S."/>
            <person name="Mann M."/>
        </authorList>
    </citation>
    <scope>IDENTIFICATION BY MASS SPECTROMETRY [LARGE SCALE ANALYSIS]</scope>
    <source>
        <tissue>Cervix carcinoma</tissue>
    </source>
</reference>
<reference key="31">
    <citation type="journal article" date="2011" name="BMC Syst. Biol.">
        <title>Initial characterization of the human central proteome.</title>
        <authorList>
            <person name="Burkard T.R."/>
            <person name="Planyavsky M."/>
            <person name="Kaupe I."/>
            <person name="Breitwieser F.P."/>
            <person name="Buerckstuemmer T."/>
            <person name="Bennett K.L."/>
            <person name="Superti-Furga G."/>
            <person name="Colinge J."/>
        </authorList>
    </citation>
    <scope>IDENTIFICATION BY MASS SPECTROMETRY [LARGE SCALE ANALYSIS]</scope>
</reference>
<reference key="32">
    <citation type="journal article" date="2011" name="J. Cell Biol.">
        <title>MDC1 collaborates with TopBP1 in DNA replication checkpoint control.</title>
        <authorList>
            <person name="Wang J."/>
            <person name="Gong Z."/>
            <person name="Chen J."/>
        </authorList>
    </citation>
    <scope>FUNCTION</scope>
    <scope>CATALYTIC ACTIVITY</scope>
</reference>
<reference key="33">
    <citation type="journal article" date="2011" name="Mol. Cell">
        <title>Serine 403 phosphorylation of p62/SQSTM1 regulates selective autophagic clearance of ubiquitinated proteins.</title>
        <authorList>
            <person name="Matsumoto G."/>
            <person name="Wada K."/>
            <person name="Okuno M."/>
            <person name="Kurosawa M."/>
            <person name="Nukina N."/>
        </authorList>
    </citation>
    <scope>FUNCTION</scope>
    <scope>CATALYTIC ACTIVITY</scope>
</reference>
<reference key="34">
    <citation type="journal article" date="2012" name="Cancer Res.">
        <title>The SUMO E3-ligase PIAS1 regulates the tumor suppressor PML and its oncogenic counterpart PML-RARA.</title>
        <authorList>
            <person name="Rabellino A."/>
            <person name="Carter B."/>
            <person name="Konstantinidou G."/>
            <person name="Wu S.Y."/>
            <person name="Rimessi A."/>
            <person name="Byers L.A."/>
            <person name="Heymach J.V."/>
            <person name="Girard L."/>
            <person name="Chiang C.M."/>
            <person name="Teruya-Feldstein J."/>
            <person name="Scaglioni P.P."/>
        </authorList>
    </citation>
    <scope>FUNCTION</scope>
    <scope>INTERACTION WITH PML</scope>
</reference>
<reference key="35">
    <citation type="journal article" date="2012" name="Mol. Cell">
        <title>Plk1 and CK2 act in concert to regulate Rad51 during DNA double strand break repair.</title>
        <authorList>
            <person name="Yata K."/>
            <person name="Lloyd J."/>
            <person name="Maslen S."/>
            <person name="Bleuyard J.Y."/>
            <person name="Skehel M."/>
            <person name="Smerdon S.J."/>
            <person name="Esashi F."/>
        </authorList>
    </citation>
    <scope>FUNCTION</scope>
    <scope>CATALYTIC ACTIVITY</scope>
</reference>
<reference key="36">
    <citation type="journal article" date="2012" name="Mol. Cell. Biol.">
        <title>Phosphorylation of the transcription factor YY1 by CK2alpha prevents cleavage by caspase 7 during apoptosis.</title>
        <authorList>
            <person name="Riman S."/>
            <person name="Rizkallah R."/>
            <person name="Kassardjian A."/>
            <person name="Alexander K.E."/>
            <person name="Luescher B."/>
            <person name="Hurt M.M."/>
        </authorList>
    </citation>
    <scope>FUNCTION</scope>
    <scope>CATALYTIC ACTIVITY</scope>
</reference>
<reference key="37">
    <citation type="journal article" date="2013" name="Biochim. Biophys. Acta">
        <title>Functional interaction of protein kinase CK2 and activating transcription factor 4 (ATF4), a key player in the cellular stress response.</title>
        <authorList>
            <person name="Ampofo E."/>
            <person name="Sokolowsky T."/>
            <person name="Goetz C."/>
            <person name="Montenarh M."/>
        </authorList>
    </citation>
    <scope>FUNCTION</scope>
    <scope>CATALYTIC ACTIVITY</scope>
    <scope>SUBCELLULAR LOCATION</scope>
</reference>
<reference key="38">
    <citation type="journal article" date="2015" name="Int. J. Cancer">
        <title>CK2alpha phosphorylates DBC1 and is involved in the progression of gastric carcinoma and predicts poor survival of gastric carcinoma patients.</title>
        <authorList>
            <person name="Bae J.S."/>
            <person name="Park S.H."/>
            <person name="Kim K.M."/>
            <person name="Kwon K.S."/>
            <person name="Kim C.Y."/>
            <person name="Lee H.K."/>
            <person name="Park B.H."/>
            <person name="Park H.S."/>
            <person name="Lee H."/>
            <person name="Moon W.S."/>
            <person name="Chung M.J."/>
            <person name="Sylvester K.G."/>
            <person name="Jang K.Y."/>
        </authorList>
    </citation>
    <scope>FUNCTION</scope>
    <scope>INTERACTION WITH CCAR2</scope>
    <scope>SUBCELLULAR LOCATION</scope>
    <scope>TISSUE SPECIFICITY</scope>
</reference>
<reference key="39">
    <citation type="journal article" date="2016" name="Hum. Genet.">
        <title>De novo mutations in CSNK2A1 are associated with neurodevelopmental abnormalities and dysmorphic features.</title>
        <authorList>
            <person name="Okur V."/>
            <person name="Cho M.T."/>
            <person name="Henderson L."/>
            <person name="Retterer K."/>
            <person name="Schneider M."/>
            <person name="Sattler S."/>
            <person name="Niyazov D."/>
            <person name="Azage M."/>
            <person name="Smith S."/>
            <person name="Picker J."/>
            <person name="Lincoln S."/>
            <person name="Tarnopolsky M."/>
            <person name="Brady L."/>
            <person name="Bjornsson H.T."/>
            <person name="Applegate C."/>
            <person name="Dameron A."/>
            <person name="Willaert R."/>
            <person name="Baskin B."/>
            <person name="Juusola J."/>
            <person name="Chung W.K."/>
        </authorList>
    </citation>
    <scope>INVOLVEMENT IN OCNDS</scope>
    <scope>VARIANTS OCNDS GLN-47; SER-50; GLY-175 AND ARG-198</scope>
</reference>
<reference key="40">
    <citation type="journal article" date="2016" name="J. Cell Biol.">
        <title>TOPBP1 regulates RAD51 phosphorylation and chromatin loading and determines PARP inhibitor sensitivity.</title>
        <authorList>
            <person name="Moudry P."/>
            <person name="Watanabe K."/>
            <person name="Wolanin K.M."/>
            <person name="Bartkova J."/>
            <person name="Wassing I.E."/>
            <person name="Watanabe S."/>
            <person name="Strauss R."/>
            <person name="Troelsgaard Pedersen R."/>
            <person name="Oestergaard V.H."/>
            <person name="Lisby M."/>
            <person name="Andujar-Sanchez M."/>
            <person name="Maya-Mendoza A."/>
            <person name="Esashi F."/>
            <person name="Lukas J."/>
            <person name="Bartek J."/>
        </authorList>
    </citation>
    <scope>FUNCTION</scope>
</reference>
<reference key="41">
    <citation type="journal article" date="2017" name="Cancer Res.">
        <title>Plk1 Phosphorylation of Mre11 Antagonizes the DNA Damage Response.</title>
        <authorList>
            <person name="Li Z."/>
            <person name="Li J."/>
            <person name="Kong Y."/>
            <person name="Yan S."/>
            <person name="Ahmad N."/>
            <person name="Liu X."/>
        </authorList>
    </citation>
    <scope>FUNCTION</scope>
    <scope>CATALYTIC ACTIVITY</scope>
</reference>
<reference key="42">
    <citation type="journal article" date="2019" name="Cell Rep.">
        <title>Post-translational regulation of FNIP1 creates a rheostat for the molecular chaperone Hsp90.</title>
        <authorList>
            <person name="Sager R.A."/>
            <person name="Woodford M.R."/>
            <person name="Backe S.J."/>
            <person name="Makedon A.M."/>
            <person name="Baker-Williams A.J."/>
            <person name="DiGregorio B.T."/>
            <person name="Loiselle D.R."/>
            <person name="Haystead T.A."/>
            <person name="Zachara N.E."/>
            <person name="Prodromou C."/>
            <person name="Bourboulia D."/>
            <person name="Schmidt L.S."/>
            <person name="Linehan W.M."/>
            <person name="Bratslavsky G."/>
            <person name="Mollapour M."/>
        </authorList>
    </citation>
    <scope>FUNCTION</scope>
    <scope>CATALYTIC ACTIVITY</scope>
</reference>
<reference key="43">
    <citation type="journal article" date="2019" name="Proc. Natl. Acad. Sci. U.S.A.">
        <title>Phosphoregulated FMRP phase separation models activity-dependent translation through bidirectional control of mRNA granule formation.</title>
        <authorList>
            <person name="Tsang B."/>
            <person name="Arsenault J."/>
            <person name="Vernon R.M."/>
            <person name="Lin H."/>
            <person name="Sonenberg N."/>
            <person name="Wang L.Y."/>
            <person name="Bah A."/>
            <person name="Forman-Kay J.D."/>
        </authorList>
    </citation>
    <scope>FUNCTION</scope>
</reference>
<reference key="44">
    <citation type="journal article" date="2019" name="Mol. Cell">
        <title>MDC1 interacts with TOPBP1 to maintain chromosomal stability during mitosis.</title>
        <authorList>
            <person name="Leimbacher P.A."/>
            <person name="Jones S.E."/>
            <person name="Shorrocks A.K."/>
            <person name="de Marco Zompit M."/>
            <person name="Day M."/>
            <person name="Blaauwendraad J."/>
            <person name="Bundschuh D."/>
            <person name="Bonham S."/>
            <person name="Fischer R."/>
            <person name="Fink D."/>
            <person name="Kessler B.M."/>
            <person name="Oliver A.W."/>
            <person name="Pearl L.H."/>
            <person name="Blackford A.N."/>
            <person name="Stucki M."/>
        </authorList>
    </citation>
    <scope>FUNCTION</scope>
    <scope>CATALYTIC ACTIVITY</scope>
</reference>
<reference key="45">
    <citation type="journal article" date="2019" name="Science">
        <title>Phospho-dependent phase separation of FMRP and CAPRIN1 recapitulates regulation of translation and deadenylation.</title>
        <authorList>
            <person name="Kim T.H."/>
            <person name="Tsang B."/>
            <person name="Vernon R.M."/>
            <person name="Sonenberg N."/>
            <person name="Kay L.E."/>
            <person name="Forman-Kay J.D."/>
        </authorList>
    </citation>
    <scope>FUNCTION</scope>
    <scope>CATALYTIC ACTIVITY</scope>
</reference>
<reference key="46">
    <citation type="journal article" date="2022" name="Mol. Cell">
        <title>A PARylation-phosphorylation cascade promotes TOPBP1 loading and RPA-RAD51 exchange in homologous recombination.</title>
        <authorList>
            <person name="Zhao J."/>
            <person name="Tian S."/>
            <person name="Guo Q."/>
            <person name="Bao K."/>
            <person name="Yu G."/>
            <person name="Wang X."/>
            <person name="Shen X."/>
            <person name="Zhang J."/>
            <person name="Chen J."/>
            <person name="Yang Y."/>
            <person name="Liu L."/>
            <person name="Li X."/>
            <person name="Hao J."/>
            <person name="Yang N."/>
            <person name="Liu Z."/>
            <person name="Ai D."/>
            <person name="Yang J."/>
            <person name="Zhu Y."/>
            <person name="Yao Z."/>
            <person name="Ma S."/>
            <person name="Zhang K."/>
            <person name="Shi L."/>
        </authorList>
    </citation>
    <scope>FUNCTION</scope>
    <scope>CATALYTIC ACTIVITY</scope>
</reference>
<reference key="47">
    <citation type="journal article" date="2024" name="Cells">
        <title>Identification and Characterization of HIRIP3 as a Histone H2A Chaperone.</title>
        <authorList>
            <person name="Ignatyeva M."/>
            <person name="Patel A.K.M."/>
            <person name="Ibrahim A."/>
            <person name="Albiheyri R.S."/>
            <person name="Zari A.T."/>
            <person name="Bahieldin A."/>
            <person name="Bronner C."/>
            <person name="Sabir J.S.M."/>
            <person name="Hamiche A."/>
        </authorList>
    </citation>
    <scope>FUNCTION</scope>
    <scope>INTERACTION WITH HIRIP3</scope>
    <scope>DENTIFICATION BY MASS SPECTROMETRY</scope>
</reference>
<reference key="48">
    <citation type="journal article" date="2000" name="Acta Crystallogr. D">
        <title>Crystallization and preliminary characterization of crystals of human protein kinase CK2.</title>
        <authorList>
            <person name="Niefind K."/>
            <person name="Guerra B."/>
            <person name="Ermakowa I."/>
            <person name="Issinger O.G."/>
        </authorList>
    </citation>
    <scope>X-RAY CRYSTALLOGRAPHY (3.1 ANGSTROMS) OF 1-337</scope>
    <scope>SUBUNIT</scope>
</reference>
<reference key="49">
    <citation type="journal article" date="2001" name="EMBO J.">
        <title>Crystal structure of human protein kinase CK2: insights into basic properties of the CK2 holoenzyme.</title>
        <authorList>
            <person name="Niefind K."/>
            <person name="Guerra B."/>
            <person name="Ermakowa I."/>
            <person name="Issinger O.G."/>
        </authorList>
    </citation>
    <scope>X-RAY CRYSTALLOGRAPHY (3.1 ANGSTROMS) OF 1-337 IN COMPLEX WITH CSNK2B</scope>
    <scope>SUBUNIT</scope>
</reference>
<reference key="50">
    <citation type="journal article" date="2003" name="Acta Crystallogr. D">
        <title>Three-dimensional atomic structure of a catalytic subunit mutant of human protein kinase CK2.</title>
        <authorList>
            <person name="Pechkova E."/>
            <person name="Zanotti G."/>
            <person name="Nicolini C."/>
        </authorList>
    </citation>
    <scope>X-RAY CRYSTALLOGRAPHY (2.4 ANGSTROMS) OF 1-329</scope>
</reference>
<reference key="51">
    <citation type="journal article" date="2003" name="J. Mol. Biol.">
        <title>Crystal structure of a C-terminal deletion mutant of human protein kinase CK2 catalytic subunit.</title>
        <authorList>
            <person name="Ermakova I."/>
            <person name="Boldyreff B."/>
            <person name="Issinger O.G."/>
            <person name="Niefind K."/>
        </authorList>
    </citation>
    <scope>X-RAY CRYSTALLOGRAPHY (2.5 ANGSTROMS) OF 2-335</scope>
</reference>
<gene>
    <name type="primary">CSNK2A1</name>
    <name type="synonym">CK2A1</name>
</gene>